<evidence type="ECO:0000269" key="1">
    <source>
    </source>
</evidence>
<evidence type="ECO:0000269" key="2">
    <source>
    </source>
</evidence>
<evidence type="ECO:0000269" key="3">
    <source>
    </source>
</evidence>
<evidence type="ECO:0000269" key="4">
    <source>
    </source>
</evidence>
<evidence type="ECO:0000269" key="5">
    <source>
    </source>
</evidence>
<evidence type="ECO:0000269" key="6">
    <source>
    </source>
</evidence>
<evidence type="ECO:0000269" key="7">
    <source>
    </source>
</evidence>
<evidence type="ECO:0000269" key="8">
    <source>
    </source>
</evidence>
<evidence type="ECO:0000269" key="9">
    <source>
    </source>
</evidence>
<evidence type="ECO:0000269" key="10">
    <source>
    </source>
</evidence>
<evidence type="ECO:0000269" key="11">
    <source>
    </source>
</evidence>
<evidence type="ECO:0000269" key="12">
    <source>
    </source>
</evidence>
<evidence type="ECO:0000269" key="13">
    <source>
    </source>
</evidence>
<evidence type="ECO:0000269" key="14">
    <source>
    </source>
</evidence>
<evidence type="ECO:0000303" key="15">
    <source>
    </source>
</evidence>
<evidence type="ECO:0000305" key="16"/>
<evidence type="ECO:0000305" key="17">
    <source>
    </source>
</evidence>
<evidence type="ECO:0007829" key="18">
    <source>
        <dbReference type="PDB" id="8C8Z"/>
    </source>
</evidence>
<evidence type="ECO:0007829" key="19">
    <source>
        <dbReference type="PDB" id="8CGK"/>
    </source>
</evidence>
<evidence type="ECO:0007829" key="20">
    <source>
        <dbReference type="PDB" id="8G6Y"/>
    </source>
</evidence>
<sequence length="104" mass="11316">MAAKIRRDDEVIVLTGKDKGKRGKVKNVLSSGKVIVEGINLVKKHQKPVPALNQPGGIVEKEAAIQVSNVAIFNAATGKADRVGFRFEDGKKVRFFKSNSETIK</sequence>
<name>RL24_ECOLI</name>
<dbReference type="EMBL" id="X01563">
    <property type="protein sequence ID" value="CAA25716.1"/>
    <property type="molecule type" value="Genomic_DNA"/>
</dbReference>
<dbReference type="EMBL" id="U18997">
    <property type="protein sequence ID" value="AAA58106.1"/>
    <property type="molecule type" value="Genomic_DNA"/>
</dbReference>
<dbReference type="EMBL" id="U00096">
    <property type="protein sequence ID" value="AAC76334.1"/>
    <property type="molecule type" value="Genomic_DNA"/>
</dbReference>
<dbReference type="EMBL" id="AP009048">
    <property type="protein sequence ID" value="BAE77982.1"/>
    <property type="molecule type" value="Genomic_DNA"/>
</dbReference>
<dbReference type="EMBL" id="M10195">
    <property type="protein sequence ID" value="AAA24050.1"/>
    <property type="molecule type" value="Genomic_DNA"/>
</dbReference>
<dbReference type="PIR" id="H65123">
    <property type="entry name" value="R5EC24"/>
</dbReference>
<dbReference type="RefSeq" id="NP_417768.1">
    <property type="nucleotide sequence ID" value="NC_000913.3"/>
</dbReference>
<dbReference type="RefSeq" id="WP_000729185.1">
    <property type="nucleotide sequence ID" value="NZ_STEB01000038.1"/>
</dbReference>
<dbReference type="PDB" id="1ML5">
    <property type="method" value="EM"/>
    <property type="resolution" value="14.00 A"/>
    <property type="chains" value="u=2-104"/>
</dbReference>
<dbReference type="PDB" id="2J28">
    <property type="method" value="EM"/>
    <property type="resolution" value="8.00 A"/>
    <property type="chains" value="U=2-103"/>
</dbReference>
<dbReference type="PDB" id="2RDO">
    <property type="method" value="EM"/>
    <property type="resolution" value="9.10 A"/>
    <property type="chains" value="U=2-104"/>
</dbReference>
<dbReference type="PDB" id="2VRH">
    <property type="method" value="EM"/>
    <property type="resolution" value="19.00 A"/>
    <property type="chains" value="C=2-104"/>
</dbReference>
<dbReference type="PDB" id="3BBX">
    <property type="method" value="EM"/>
    <property type="resolution" value="10.00 A"/>
    <property type="chains" value="U=2-104"/>
</dbReference>
<dbReference type="PDB" id="3J45">
    <property type="method" value="EM"/>
    <property type="resolution" value="9.50 A"/>
    <property type="chains" value="U=2-104"/>
</dbReference>
<dbReference type="PDB" id="3J46">
    <property type="method" value="EM"/>
    <property type="resolution" value="10.10 A"/>
    <property type="chains" value="U=2-104"/>
</dbReference>
<dbReference type="PDB" id="3J5L">
    <property type="method" value="EM"/>
    <property type="resolution" value="6.60 A"/>
    <property type="chains" value="U=2-103"/>
</dbReference>
<dbReference type="PDB" id="3J7Z">
    <property type="method" value="EM"/>
    <property type="resolution" value="3.90 A"/>
    <property type="chains" value="U=1-104"/>
</dbReference>
<dbReference type="PDB" id="3J8G">
    <property type="method" value="EM"/>
    <property type="resolution" value="5.00 A"/>
    <property type="chains" value="U=1-104"/>
</dbReference>
<dbReference type="PDB" id="3J9Y">
    <property type="method" value="EM"/>
    <property type="resolution" value="3.90 A"/>
    <property type="chains" value="U=1-104"/>
</dbReference>
<dbReference type="PDB" id="3J9Z">
    <property type="method" value="EM"/>
    <property type="resolution" value="3.60 A"/>
    <property type="chains" value="LS=2-104"/>
</dbReference>
<dbReference type="PDB" id="3JA1">
    <property type="method" value="EM"/>
    <property type="resolution" value="3.60 A"/>
    <property type="chains" value="LW=2-104"/>
</dbReference>
<dbReference type="PDB" id="3JBU">
    <property type="method" value="EM"/>
    <property type="resolution" value="3.64 A"/>
    <property type="chains" value="u=1-104"/>
</dbReference>
<dbReference type="PDB" id="3JBV">
    <property type="method" value="EM"/>
    <property type="resolution" value="3.32 A"/>
    <property type="chains" value="u=1-104"/>
</dbReference>
<dbReference type="PDB" id="3JCD">
    <property type="method" value="EM"/>
    <property type="resolution" value="3.70 A"/>
    <property type="chains" value="U=1-104"/>
</dbReference>
<dbReference type="PDB" id="3JCE">
    <property type="method" value="EM"/>
    <property type="resolution" value="3.20 A"/>
    <property type="chains" value="U=1-104"/>
</dbReference>
<dbReference type="PDB" id="3JCJ">
    <property type="method" value="EM"/>
    <property type="resolution" value="3.70 A"/>
    <property type="chains" value="T=1-104"/>
</dbReference>
<dbReference type="PDB" id="3JCN">
    <property type="method" value="EM"/>
    <property type="resolution" value="4.60 A"/>
    <property type="chains" value="U=1-104"/>
</dbReference>
<dbReference type="PDB" id="4CSU">
    <property type="method" value="EM"/>
    <property type="resolution" value="5.50 A"/>
    <property type="chains" value="U=2-104"/>
</dbReference>
<dbReference type="PDB" id="4U1U">
    <property type="method" value="X-ray"/>
    <property type="resolution" value="2.95 A"/>
    <property type="chains" value="BU/DU=2-103"/>
</dbReference>
<dbReference type="PDB" id="4U1V">
    <property type="method" value="X-ray"/>
    <property type="resolution" value="3.00 A"/>
    <property type="chains" value="BU/DU=2-103"/>
</dbReference>
<dbReference type="PDB" id="4U20">
    <property type="method" value="X-ray"/>
    <property type="resolution" value="2.90 A"/>
    <property type="chains" value="BU/DU=2-103"/>
</dbReference>
<dbReference type="PDB" id="4U24">
    <property type="method" value="X-ray"/>
    <property type="resolution" value="2.90 A"/>
    <property type="chains" value="BU/DU=2-103"/>
</dbReference>
<dbReference type="PDB" id="4U25">
    <property type="method" value="X-ray"/>
    <property type="resolution" value="2.90 A"/>
    <property type="chains" value="BU/DU=2-103"/>
</dbReference>
<dbReference type="PDB" id="4U26">
    <property type="method" value="X-ray"/>
    <property type="resolution" value="2.80 A"/>
    <property type="chains" value="BU/DU=2-103"/>
</dbReference>
<dbReference type="PDB" id="4U27">
    <property type="method" value="X-ray"/>
    <property type="resolution" value="2.80 A"/>
    <property type="chains" value="BU/DU=2-103"/>
</dbReference>
<dbReference type="PDB" id="4UY8">
    <property type="method" value="EM"/>
    <property type="resolution" value="3.80 A"/>
    <property type="chains" value="U=2-103"/>
</dbReference>
<dbReference type="PDB" id="4V47">
    <property type="method" value="EM"/>
    <property type="resolution" value="12.30 A"/>
    <property type="chains" value="AS=2-104"/>
</dbReference>
<dbReference type="PDB" id="4V48">
    <property type="method" value="EM"/>
    <property type="resolution" value="11.50 A"/>
    <property type="chains" value="AS=2-104"/>
</dbReference>
<dbReference type="PDB" id="4V4H">
    <property type="method" value="X-ray"/>
    <property type="resolution" value="3.46 A"/>
    <property type="chains" value="BU/DU=1-104"/>
</dbReference>
<dbReference type="PDB" id="4V4Q">
    <property type="method" value="X-ray"/>
    <property type="resolution" value="3.46 A"/>
    <property type="chains" value="BU/DU=2-104"/>
</dbReference>
<dbReference type="PDB" id="4V4V">
    <property type="method" value="EM"/>
    <property type="resolution" value="15.00 A"/>
    <property type="chains" value="BS=4-102"/>
</dbReference>
<dbReference type="PDB" id="4V4W">
    <property type="method" value="EM"/>
    <property type="resolution" value="15.00 A"/>
    <property type="chains" value="BS=4-102"/>
</dbReference>
<dbReference type="PDB" id="4V50">
    <property type="method" value="X-ray"/>
    <property type="resolution" value="3.22 A"/>
    <property type="chains" value="BU/DU=2-104"/>
</dbReference>
<dbReference type="PDB" id="4V52">
    <property type="method" value="X-ray"/>
    <property type="resolution" value="3.21 A"/>
    <property type="chains" value="BU/DU=2-104"/>
</dbReference>
<dbReference type="PDB" id="4V53">
    <property type="method" value="X-ray"/>
    <property type="resolution" value="3.54 A"/>
    <property type="chains" value="BU/DU=2-104"/>
</dbReference>
<dbReference type="PDB" id="4V54">
    <property type="method" value="X-ray"/>
    <property type="resolution" value="3.30 A"/>
    <property type="chains" value="BU/DU=2-104"/>
</dbReference>
<dbReference type="PDB" id="4V55">
    <property type="method" value="X-ray"/>
    <property type="resolution" value="4.00 A"/>
    <property type="chains" value="BU/DU=2-104"/>
</dbReference>
<dbReference type="PDB" id="4V56">
    <property type="method" value="X-ray"/>
    <property type="resolution" value="3.93 A"/>
    <property type="chains" value="BU/DU=2-104"/>
</dbReference>
<dbReference type="PDB" id="4V57">
    <property type="method" value="X-ray"/>
    <property type="resolution" value="3.50 A"/>
    <property type="chains" value="BU/DU=2-104"/>
</dbReference>
<dbReference type="PDB" id="4V5B">
    <property type="method" value="X-ray"/>
    <property type="resolution" value="3.74 A"/>
    <property type="chains" value="AU/CU=2-104"/>
</dbReference>
<dbReference type="PDB" id="4V5H">
    <property type="method" value="EM"/>
    <property type="resolution" value="5.80 A"/>
    <property type="chains" value="BU=2-103"/>
</dbReference>
<dbReference type="PDB" id="4V5Y">
    <property type="method" value="X-ray"/>
    <property type="resolution" value="4.45 A"/>
    <property type="chains" value="BU/DU=2-104"/>
</dbReference>
<dbReference type="PDB" id="4V64">
    <property type="method" value="X-ray"/>
    <property type="resolution" value="3.50 A"/>
    <property type="chains" value="BU/DU=2-104"/>
</dbReference>
<dbReference type="PDB" id="4V65">
    <property type="method" value="EM"/>
    <property type="resolution" value="9.00 A"/>
    <property type="chains" value="BO=1-103"/>
</dbReference>
<dbReference type="PDB" id="4V66">
    <property type="method" value="EM"/>
    <property type="resolution" value="9.00 A"/>
    <property type="chains" value="BO=1-103"/>
</dbReference>
<dbReference type="PDB" id="4V69">
    <property type="method" value="EM"/>
    <property type="resolution" value="6.70 A"/>
    <property type="chains" value="BU=2-103"/>
</dbReference>
<dbReference type="PDB" id="4V6C">
    <property type="method" value="X-ray"/>
    <property type="resolution" value="3.19 A"/>
    <property type="chains" value="BU/DU=1-104"/>
</dbReference>
<dbReference type="PDB" id="4V6D">
    <property type="method" value="X-ray"/>
    <property type="resolution" value="3.81 A"/>
    <property type="chains" value="BU/DU=1-104"/>
</dbReference>
<dbReference type="PDB" id="4V6E">
    <property type="method" value="X-ray"/>
    <property type="resolution" value="3.71 A"/>
    <property type="chains" value="BU/DU=1-104"/>
</dbReference>
<dbReference type="PDB" id="4V6K">
    <property type="method" value="EM"/>
    <property type="resolution" value="8.25 A"/>
    <property type="chains" value="AV=1-104"/>
</dbReference>
<dbReference type="PDB" id="4V6L">
    <property type="method" value="EM"/>
    <property type="resolution" value="13.20 A"/>
    <property type="chains" value="BV=1-104"/>
</dbReference>
<dbReference type="PDB" id="4V6M">
    <property type="method" value="EM"/>
    <property type="resolution" value="7.10 A"/>
    <property type="chains" value="BU=2-104"/>
</dbReference>
<dbReference type="PDB" id="4V6N">
    <property type="method" value="EM"/>
    <property type="resolution" value="12.10 A"/>
    <property type="chains" value="AW=2-104"/>
</dbReference>
<dbReference type="PDB" id="4V6O">
    <property type="method" value="EM"/>
    <property type="resolution" value="14.70 A"/>
    <property type="chains" value="BW=2-104"/>
</dbReference>
<dbReference type="PDB" id="4V6P">
    <property type="method" value="EM"/>
    <property type="resolution" value="13.50 A"/>
    <property type="chains" value="BW=2-104"/>
</dbReference>
<dbReference type="PDB" id="4V6Q">
    <property type="method" value="EM"/>
    <property type="resolution" value="11.50 A"/>
    <property type="chains" value="BW=2-104"/>
</dbReference>
<dbReference type="PDB" id="4V6R">
    <property type="method" value="EM"/>
    <property type="resolution" value="11.50 A"/>
    <property type="chains" value="BW=2-104"/>
</dbReference>
<dbReference type="PDB" id="4V6S">
    <property type="method" value="EM"/>
    <property type="resolution" value="13.10 A"/>
    <property type="chains" value="AW=2-104"/>
</dbReference>
<dbReference type="PDB" id="4V6T">
    <property type="method" value="EM"/>
    <property type="resolution" value="8.30 A"/>
    <property type="chains" value="BU=2-103"/>
</dbReference>
<dbReference type="PDB" id="4V6V">
    <property type="method" value="EM"/>
    <property type="resolution" value="9.80 A"/>
    <property type="chains" value="BY=2-104"/>
</dbReference>
<dbReference type="PDB" id="4V6Y">
    <property type="method" value="EM"/>
    <property type="resolution" value="12.00 A"/>
    <property type="chains" value="BU=1-103"/>
</dbReference>
<dbReference type="PDB" id="4V6Z">
    <property type="method" value="EM"/>
    <property type="resolution" value="12.00 A"/>
    <property type="chains" value="BU=1-103"/>
</dbReference>
<dbReference type="PDB" id="4V70">
    <property type="method" value="EM"/>
    <property type="resolution" value="17.00 A"/>
    <property type="chains" value="BU=1-103"/>
</dbReference>
<dbReference type="PDB" id="4V71">
    <property type="method" value="EM"/>
    <property type="resolution" value="20.00 A"/>
    <property type="chains" value="BU=1-103"/>
</dbReference>
<dbReference type="PDB" id="4V72">
    <property type="method" value="EM"/>
    <property type="resolution" value="13.00 A"/>
    <property type="chains" value="BU=1-103"/>
</dbReference>
<dbReference type="PDB" id="4V73">
    <property type="method" value="EM"/>
    <property type="resolution" value="15.00 A"/>
    <property type="chains" value="BU=1-103"/>
</dbReference>
<dbReference type="PDB" id="4V74">
    <property type="method" value="EM"/>
    <property type="resolution" value="17.00 A"/>
    <property type="chains" value="BU=1-103"/>
</dbReference>
<dbReference type="PDB" id="4V75">
    <property type="method" value="EM"/>
    <property type="resolution" value="12.00 A"/>
    <property type="chains" value="BU=1-103"/>
</dbReference>
<dbReference type="PDB" id="4V76">
    <property type="method" value="EM"/>
    <property type="resolution" value="17.00 A"/>
    <property type="chains" value="BU=1-103"/>
</dbReference>
<dbReference type="PDB" id="4V77">
    <property type="method" value="EM"/>
    <property type="resolution" value="17.00 A"/>
    <property type="chains" value="BU=1-103"/>
</dbReference>
<dbReference type="PDB" id="4V78">
    <property type="method" value="EM"/>
    <property type="resolution" value="20.00 A"/>
    <property type="chains" value="BU=1-103"/>
</dbReference>
<dbReference type="PDB" id="4V79">
    <property type="method" value="EM"/>
    <property type="resolution" value="15.00 A"/>
    <property type="chains" value="BU=1-103"/>
</dbReference>
<dbReference type="PDB" id="4V7A">
    <property type="method" value="EM"/>
    <property type="resolution" value="9.00 A"/>
    <property type="chains" value="BU=1-103"/>
</dbReference>
<dbReference type="PDB" id="4V7B">
    <property type="method" value="EM"/>
    <property type="resolution" value="6.80 A"/>
    <property type="chains" value="BU=1-104"/>
</dbReference>
<dbReference type="PDB" id="4V7C">
    <property type="method" value="EM"/>
    <property type="resolution" value="7.60 A"/>
    <property type="chains" value="BW=2-104"/>
</dbReference>
<dbReference type="PDB" id="4V7D">
    <property type="method" value="EM"/>
    <property type="resolution" value="7.60 A"/>
    <property type="chains" value="AX=2-104"/>
</dbReference>
<dbReference type="PDB" id="4V7I">
    <property type="method" value="EM"/>
    <property type="resolution" value="9.60 A"/>
    <property type="chains" value="AU=1-104"/>
</dbReference>
<dbReference type="PDB" id="4V7S">
    <property type="method" value="X-ray"/>
    <property type="resolution" value="3.25 A"/>
    <property type="chains" value="BU/DU=2-103"/>
</dbReference>
<dbReference type="PDB" id="4V7T">
    <property type="method" value="X-ray"/>
    <property type="resolution" value="3.19 A"/>
    <property type="chains" value="BU/DU=2-103"/>
</dbReference>
<dbReference type="PDB" id="4V7U">
    <property type="method" value="X-ray"/>
    <property type="resolution" value="3.10 A"/>
    <property type="chains" value="BU/DU=2-103"/>
</dbReference>
<dbReference type="PDB" id="4V7V">
    <property type="method" value="X-ray"/>
    <property type="resolution" value="3.29 A"/>
    <property type="chains" value="BU/DU=2-103"/>
</dbReference>
<dbReference type="PDB" id="4V85">
    <property type="method" value="X-ray"/>
    <property type="resolution" value="3.20 A"/>
    <property type="chains" value="BY=1-104"/>
</dbReference>
<dbReference type="PDB" id="4V89">
    <property type="method" value="X-ray"/>
    <property type="resolution" value="3.70 A"/>
    <property type="chains" value="BY=1-104"/>
</dbReference>
<dbReference type="PDB" id="4V9C">
    <property type="method" value="X-ray"/>
    <property type="resolution" value="3.30 A"/>
    <property type="chains" value="BU/DU=1-104"/>
</dbReference>
<dbReference type="PDB" id="4V9D">
    <property type="method" value="X-ray"/>
    <property type="resolution" value="3.00 A"/>
    <property type="chains" value="CU/DU=2-103"/>
</dbReference>
<dbReference type="PDB" id="4V9O">
    <property type="method" value="X-ray"/>
    <property type="resolution" value="2.90 A"/>
    <property type="chains" value="AU/CU/EU/GU=1-104"/>
</dbReference>
<dbReference type="PDB" id="4V9P">
    <property type="method" value="X-ray"/>
    <property type="resolution" value="2.90 A"/>
    <property type="chains" value="AU/CU/EU/GU=1-104"/>
</dbReference>
<dbReference type="PDB" id="4WF1">
    <property type="method" value="X-ray"/>
    <property type="resolution" value="3.09 A"/>
    <property type="chains" value="BU/DU=2-103"/>
</dbReference>
<dbReference type="PDB" id="4WOI">
    <property type="method" value="X-ray"/>
    <property type="resolution" value="3.00 A"/>
    <property type="chains" value="BU/CU=1-104"/>
</dbReference>
<dbReference type="PDB" id="4WWW">
    <property type="method" value="X-ray"/>
    <property type="resolution" value="3.10 A"/>
    <property type="chains" value="RU/YU=2-103"/>
</dbReference>
<dbReference type="PDB" id="4YBB">
    <property type="method" value="X-ray"/>
    <property type="resolution" value="2.10 A"/>
    <property type="chains" value="CV/DV=2-103"/>
</dbReference>
<dbReference type="PDB" id="5ADY">
    <property type="method" value="EM"/>
    <property type="resolution" value="4.50 A"/>
    <property type="chains" value="U=1-104"/>
</dbReference>
<dbReference type="PDB" id="5AFI">
    <property type="method" value="EM"/>
    <property type="resolution" value="2.90 A"/>
    <property type="chains" value="U=1-104"/>
</dbReference>
<dbReference type="PDB" id="5AKA">
    <property type="method" value="EM"/>
    <property type="resolution" value="5.70 A"/>
    <property type="chains" value="U=2-104"/>
</dbReference>
<dbReference type="PDB" id="5GAD">
    <property type="method" value="EM"/>
    <property type="resolution" value="3.70 A"/>
    <property type="chains" value="V=1-104"/>
</dbReference>
<dbReference type="PDB" id="5GAE">
    <property type="method" value="EM"/>
    <property type="resolution" value="3.33 A"/>
    <property type="chains" value="V=1-104"/>
</dbReference>
<dbReference type="PDB" id="5GAF">
    <property type="method" value="EM"/>
    <property type="resolution" value="4.30 A"/>
    <property type="chains" value="V=2-103"/>
</dbReference>
<dbReference type="PDB" id="5GAG">
    <property type="method" value="EM"/>
    <property type="resolution" value="3.80 A"/>
    <property type="chains" value="V=1-104"/>
</dbReference>
<dbReference type="PDB" id="5GAH">
    <property type="method" value="EM"/>
    <property type="resolution" value="3.80 A"/>
    <property type="chains" value="V=1-104"/>
</dbReference>
<dbReference type="PDB" id="5H5U">
    <property type="method" value="EM"/>
    <property type="resolution" value="3.00 A"/>
    <property type="chains" value="V=2-104"/>
</dbReference>
<dbReference type="PDB" id="5IQR">
    <property type="method" value="EM"/>
    <property type="resolution" value="3.00 A"/>
    <property type="chains" value="U=1-104"/>
</dbReference>
<dbReference type="PDB" id="5IT8">
    <property type="method" value="X-ray"/>
    <property type="resolution" value="3.12 A"/>
    <property type="chains" value="CV/DV=2-103"/>
</dbReference>
<dbReference type="PDB" id="5J5B">
    <property type="method" value="X-ray"/>
    <property type="resolution" value="2.80 A"/>
    <property type="chains" value="CV/DV=2-103"/>
</dbReference>
<dbReference type="PDB" id="5J7L">
    <property type="method" value="X-ray"/>
    <property type="resolution" value="3.00 A"/>
    <property type="chains" value="CV/DV=2-103"/>
</dbReference>
<dbReference type="PDB" id="5J88">
    <property type="method" value="X-ray"/>
    <property type="resolution" value="3.32 A"/>
    <property type="chains" value="CV/DV=2-104"/>
</dbReference>
<dbReference type="PDB" id="5J8A">
    <property type="method" value="X-ray"/>
    <property type="resolution" value="3.10 A"/>
    <property type="chains" value="CV/DV=2-104"/>
</dbReference>
<dbReference type="PDB" id="5J91">
    <property type="method" value="X-ray"/>
    <property type="resolution" value="2.96 A"/>
    <property type="chains" value="CV/DV=2-104"/>
</dbReference>
<dbReference type="PDB" id="5JC9">
    <property type="method" value="X-ray"/>
    <property type="resolution" value="3.03 A"/>
    <property type="chains" value="CV/DV=2-103"/>
</dbReference>
<dbReference type="PDB" id="5JTE">
    <property type="method" value="EM"/>
    <property type="resolution" value="3.60 A"/>
    <property type="chains" value="BU=1-104"/>
</dbReference>
<dbReference type="PDB" id="5JU8">
    <property type="method" value="EM"/>
    <property type="resolution" value="3.60 A"/>
    <property type="chains" value="BU=1-104"/>
</dbReference>
<dbReference type="PDB" id="5KCR">
    <property type="method" value="EM"/>
    <property type="resolution" value="3.60 A"/>
    <property type="chains" value="1Y=1-104"/>
</dbReference>
<dbReference type="PDB" id="5KCS">
    <property type="method" value="EM"/>
    <property type="resolution" value="3.90 A"/>
    <property type="chains" value="1Y=1-104"/>
</dbReference>
<dbReference type="PDB" id="5KPS">
    <property type="method" value="EM"/>
    <property type="resolution" value="3.90 A"/>
    <property type="chains" value="U=1-104"/>
</dbReference>
<dbReference type="PDB" id="5KPV">
    <property type="method" value="EM"/>
    <property type="resolution" value="4.10 A"/>
    <property type="chains" value="T=1-104"/>
</dbReference>
<dbReference type="PDB" id="5KPW">
    <property type="method" value="EM"/>
    <property type="resolution" value="3.90 A"/>
    <property type="chains" value="T=1-104"/>
</dbReference>
<dbReference type="PDB" id="5KPX">
    <property type="method" value="EM"/>
    <property type="resolution" value="3.90 A"/>
    <property type="chains" value="T=1-104"/>
</dbReference>
<dbReference type="PDB" id="5L3P">
    <property type="method" value="EM"/>
    <property type="resolution" value="3.70 A"/>
    <property type="chains" value="Y=1-104"/>
</dbReference>
<dbReference type="PDB" id="5LZA">
    <property type="method" value="EM"/>
    <property type="resolution" value="3.60 A"/>
    <property type="chains" value="U=2-103"/>
</dbReference>
<dbReference type="PDB" id="5LZB">
    <property type="method" value="EM"/>
    <property type="resolution" value="5.30 A"/>
    <property type="chains" value="U=2-103"/>
</dbReference>
<dbReference type="PDB" id="5LZC">
    <property type="method" value="EM"/>
    <property type="resolution" value="4.80 A"/>
    <property type="chains" value="U=2-103"/>
</dbReference>
<dbReference type="PDB" id="5LZD">
    <property type="method" value="EM"/>
    <property type="resolution" value="3.40 A"/>
    <property type="chains" value="U=2-103"/>
</dbReference>
<dbReference type="PDB" id="5LZE">
    <property type="method" value="EM"/>
    <property type="resolution" value="3.50 A"/>
    <property type="chains" value="U=2-103"/>
</dbReference>
<dbReference type="PDB" id="5LZF">
    <property type="method" value="EM"/>
    <property type="resolution" value="4.60 A"/>
    <property type="chains" value="U=2-103"/>
</dbReference>
<dbReference type="PDB" id="5MDV">
    <property type="method" value="EM"/>
    <property type="resolution" value="2.97 A"/>
    <property type="chains" value="U=1-104"/>
</dbReference>
<dbReference type="PDB" id="5MDW">
    <property type="method" value="EM"/>
    <property type="resolution" value="3.06 A"/>
    <property type="chains" value="U=1-104"/>
</dbReference>
<dbReference type="PDB" id="5MDY">
    <property type="method" value="EM"/>
    <property type="resolution" value="3.35 A"/>
    <property type="chains" value="U=1-104"/>
</dbReference>
<dbReference type="PDB" id="5MDZ">
    <property type="method" value="EM"/>
    <property type="resolution" value="3.10 A"/>
    <property type="chains" value="U=1-104"/>
</dbReference>
<dbReference type="PDB" id="5MGP">
    <property type="method" value="EM"/>
    <property type="resolution" value="3.10 A"/>
    <property type="chains" value="U=2-103"/>
</dbReference>
<dbReference type="PDB" id="5NCO">
    <property type="method" value="EM"/>
    <property type="resolution" value="4.80 A"/>
    <property type="chains" value="V=2-103"/>
</dbReference>
<dbReference type="PDB" id="5NP6">
    <property type="method" value="EM"/>
    <property type="resolution" value="3.60 A"/>
    <property type="chains" value="s=2-103"/>
</dbReference>
<dbReference type="PDB" id="5NWY">
    <property type="method" value="EM"/>
    <property type="resolution" value="2.93 A"/>
    <property type="chains" value="h=1-104"/>
</dbReference>
<dbReference type="PDB" id="5O2R">
    <property type="method" value="EM"/>
    <property type="resolution" value="3.40 A"/>
    <property type="chains" value="U=2-103"/>
</dbReference>
<dbReference type="PDB" id="5U4I">
    <property type="method" value="EM"/>
    <property type="resolution" value="3.50 A"/>
    <property type="chains" value="V=1-104"/>
</dbReference>
<dbReference type="PDB" id="5U9F">
    <property type="method" value="EM"/>
    <property type="resolution" value="3.20 A"/>
    <property type="chains" value="23=1-104"/>
</dbReference>
<dbReference type="PDB" id="5U9G">
    <property type="method" value="EM"/>
    <property type="resolution" value="3.20 A"/>
    <property type="chains" value="23=1-104"/>
</dbReference>
<dbReference type="PDB" id="5UYK">
    <property type="method" value="EM"/>
    <property type="resolution" value="3.90 A"/>
    <property type="chains" value="23=2-103"/>
</dbReference>
<dbReference type="PDB" id="5UYL">
    <property type="method" value="EM"/>
    <property type="resolution" value="3.60 A"/>
    <property type="chains" value="23=2-103"/>
</dbReference>
<dbReference type="PDB" id="5UYM">
    <property type="method" value="EM"/>
    <property type="resolution" value="3.20 A"/>
    <property type="chains" value="23=2-103"/>
</dbReference>
<dbReference type="PDB" id="5UYN">
    <property type="method" value="EM"/>
    <property type="resolution" value="4.00 A"/>
    <property type="chains" value="23=2-103"/>
</dbReference>
<dbReference type="PDB" id="5UYP">
    <property type="method" value="EM"/>
    <property type="resolution" value="3.90 A"/>
    <property type="chains" value="23=2-103"/>
</dbReference>
<dbReference type="PDB" id="5UYQ">
    <property type="method" value="EM"/>
    <property type="resolution" value="3.80 A"/>
    <property type="chains" value="23=2-103"/>
</dbReference>
<dbReference type="PDB" id="5WDT">
    <property type="method" value="EM"/>
    <property type="resolution" value="3.00 A"/>
    <property type="chains" value="U=2-103"/>
</dbReference>
<dbReference type="PDB" id="5WE4">
    <property type="method" value="EM"/>
    <property type="resolution" value="3.10 A"/>
    <property type="chains" value="U=2-103"/>
</dbReference>
<dbReference type="PDB" id="5WE6">
    <property type="method" value="EM"/>
    <property type="resolution" value="3.40 A"/>
    <property type="chains" value="U=2-103"/>
</dbReference>
<dbReference type="PDB" id="5WF0">
    <property type="method" value="EM"/>
    <property type="resolution" value="3.60 A"/>
    <property type="chains" value="U=2-103"/>
</dbReference>
<dbReference type="PDB" id="5WFK">
    <property type="method" value="EM"/>
    <property type="resolution" value="3.40 A"/>
    <property type="chains" value="U=2-103"/>
</dbReference>
<dbReference type="PDB" id="5WFS">
    <property type="method" value="EM"/>
    <property type="resolution" value="3.00 A"/>
    <property type="chains" value="U=2-103"/>
</dbReference>
<dbReference type="PDB" id="6BU8">
    <property type="method" value="EM"/>
    <property type="resolution" value="3.50 A"/>
    <property type="chains" value="23=2-103"/>
</dbReference>
<dbReference type="PDB" id="6BY1">
    <property type="method" value="X-ray"/>
    <property type="resolution" value="3.94 A"/>
    <property type="chains" value="CU/DU=2-103"/>
</dbReference>
<dbReference type="PDB" id="6C4I">
    <property type="method" value="EM"/>
    <property type="resolution" value="3.24 A"/>
    <property type="chains" value="V=1-104"/>
</dbReference>
<dbReference type="PDB" id="6DNC">
    <property type="method" value="EM"/>
    <property type="resolution" value="3.70 A"/>
    <property type="chains" value="Y=1-104"/>
</dbReference>
<dbReference type="PDB" id="6ENF">
    <property type="method" value="EM"/>
    <property type="resolution" value="3.20 A"/>
    <property type="chains" value="U=2-103"/>
</dbReference>
<dbReference type="PDB" id="6ENJ">
    <property type="method" value="EM"/>
    <property type="resolution" value="3.70 A"/>
    <property type="chains" value="U=2-103"/>
</dbReference>
<dbReference type="PDB" id="6ENU">
    <property type="method" value="EM"/>
    <property type="resolution" value="3.10 A"/>
    <property type="chains" value="U=2-103"/>
</dbReference>
<dbReference type="PDB" id="6GBZ">
    <property type="method" value="EM"/>
    <property type="resolution" value="3.80 A"/>
    <property type="chains" value="U=2-103"/>
</dbReference>
<dbReference type="PDB" id="6GC0">
    <property type="method" value="EM"/>
    <property type="resolution" value="3.80 A"/>
    <property type="chains" value="U=2-103"/>
</dbReference>
<dbReference type="PDB" id="6GC4">
    <property type="method" value="EM"/>
    <property type="resolution" value="4.30 A"/>
    <property type="chains" value="U=2-103"/>
</dbReference>
<dbReference type="PDB" id="6GC6">
    <property type="method" value="EM"/>
    <property type="resolution" value="4.30 A"/>
    <property type="chains" value="U=2-103"/>
</dbReference>
<dbReference type="PDB" id="6GC7">
    <property type="method" value="EM"/>
    <property type="resolution" value="4.30 A"/>
    <property type="chains" value="U=2-103"/>
</dbReference>
<dbReference type="PDB" id="6GC8">
    <property type="method" value="EM"/>
    <property type="resolution" value="3.80 A"/>
    <property type="chains" value="U=2-103"/>
</dbReference>
<dbReference type="PDB" id="6GWT">
    <property type="method" value="EM"/>
    <property type="resolution" value="3.80 A"/>
    <property type="chains" value="U=2-103"/>
</dbReference>
<dbReference type="PDB" id="6GXM">
    <property type="method" value="EM"/>
    <property type="resolution" value="3.80 A"/>
    <property type="chains" value="U=2-103"/>
</dbReference>
<dbReference type="PDB" id="6GXN">
    <property type="method" value="EM"/>
    <property type="resolution" value="3.90 A"/>
    <property type="chains" value="U=2-103"/>
</dbReference>
<dbReference type="PDB" id="6GXO">
    <property type="method" value="EM"/>
    <property type="resolution" value="3.90 A"/>
    <property type="chains" value="U=2-103"/>
</dbReference>
<dbReference type="PDB" id="6GXP">
    <property type="method" value="EM"/>
    <property type="resolution" value="4.40 A"/>
    <property type="chains" value="U=2-103"/>
</dbReference>
<dbReference type="PDB" id="6H4N">
    <property type="method" value="EM"/>
    <property type="resolution" value="3.00 A"/>
    <property type="chains" value="U=2-103"/>
</dbReference>
<dbReference type="PDB" id="6H58">
    <property type="method" value="EM"/>
    <property type="resolution" value="7.90 A"/>
    <property type="chains" value="U/UU=2-103"/>
</dbReference>
<dbReference type="PDB" id="6HRM">
    <property type="method" value="EM"/>
    <property type="resolution" value="2.96 A"/>
    <property type="chains" value="U=2-104"/>
</dbReference>
<dbReference type="PDB" id="6I0Y">
    <property type="method" value="EM"/>
    <property type="resolution" value="3.20 A"/>
    <property type="chains" value="h=1-104"/>
</dbReference>
<dbReference type="PDB" id="6I7V">
    <property type="method" value="X-ray"/>
    <property type="resolution" value="2.90 A"/>
    <property type="chains" value="CV/DV=2-103"/>
</dbReference>
<dbReference type="PDB" id="6O9J">
    <property type="method" value="EM"/>
    <property type="resolution" value="3.90 A"/>
    <property type="chains" value="U=2-103"/>
</dbReference>
<dbReference type="PDB" id="6O9K">
    <property type="method" value="EM"/>
    <property type="resolution" value="4.00 A"/>
    <property type="chains" value="U=2-103"/>
</dbReference>
<dbReference type="PDB" id="6OFX">
    <property type="method" value="EM"/>
    <property type="resolution" value="3.30 A"/>
    <property type="chains" value="u=2-103"/>
</dbReference>
<dbReference type="PDB" id="6OG7">
    <property type="method" value="EM"/>
    <property type="resolution" value="3.30 A"/>
    <property type="chains" value="u=2-103"/>
</dbReference>
<dbReference type="PDB" id="6OGF">
    <property type="method" value="EM"/>
    <property type="resolution" value="3.90 A"/>
    <property type="chains" value="u=1-104"/>
</dbReference>
<dbReference type="PDB" id="6OGG">
    <property type="method" value="EM"/>
    <property type="resolution" value="4.20 A"/>
    <property type="chains" value="u=1-104"/>
</dbReference>
<dbReference type="PDB" id="6OGI">
    <property type="method" value="EM"/>
    <property type="resolution" value="3.40 A"/>
    <property type="chains" value="u=1-104"/>
</dbReference>
<dbReference type="PDB" id="6OM6">
    <property type="method" value="EM"/>
    <property type="resolution" value="3.10 A"/>
    <property type="chains" value="U=1-104"/>
</dbReference>
<dbReference type="PDB" id="6ORE">
    <property type="method" value="EM"/>
    <property type="resolution" value="2.90 A"/>
    <property type="chains" value="U=2-104"/>
</dbReference>
<dbReference type="PDB" id="6ORL">
    <property type="method" value="EM"/>
    <property type="resolution" value="3.50 A"/>
    <property type="chains" value="U=2-104"/>
</dbReference>
<dbReference type="PDB" id="6OSK">
    <property type="method" value="EM"/>
    <property type="resolution" value="3.60 A"/>
    <property type="chains" value="U=2-104"/>
</dbReference>
<dbReference type="PDB" id="6OSQ">
    <property type="method" value="EM"/>
    <property type="resolution" value="3.50 A"/>
    <property type="chains" value="U=2-104"/>
</dbReference>
<dbReference type="PDB" id="6OST">
    <property type="method" value="EM"/>
    <property type="resolution" value="4.20 A"/>
    <property type="chains" value="U=2-104"/>
</dbReference>
<dbReference type="PDB" id="6OT3">
    <property type="method" value="EM"/>
    <property type="resolution" value="3.90 A"/>
    <property type="chains" value="U=2-104"/>
</dbReference>
<dbReference type="PDB" id="6OUO">
    <property type="method" value="EM"/>
    <property type="resolution" value="3.70 A"/>
    <property type="chains" value="U=2-104"/>
</dbReference>
<dbReference type="PDB" id="6PJ6">
    <property type="method" value="EM"/>
    <property type="resolution" value="2.20 A"/>
    <property type="chains" value="c=2-103"/>
</dbReference>
<dbReference type="PDB" id="6Q97">
    <property type="method" value="EM"/>
    <property type="resolution" value="3.90 A"/>
    <property type="chains" value="U=2-104"/>
</dbReference>
<dbReference type="PDB" id="6Q98">
    <property type="method" value="EM"/>
    <property type="resolution" value="4.30 A"/>
    <property type="chains" value="U=1-104"/>
</dbReference>
<dbReference type="PDB" id="6Q9A">
    <property type="method" value="EM"/>
    <property type="resolution" value="3.70 A"/>
    <property type="chains" value="U=3-103"/>
</dbReference>
<dbReference type="PDB" id="6QDW">
    <property type="method" value="EM"/>
    <property type="resolution" value="2.83 A"/>
    <property type="chains" value="u=1-104"/>
</dbReference>
<dbReference type="PDB" id="6QUL">
    <property type="method" value="EM"/>
    <property type="resolution" value="3.00 A"/>
    <property type="chains" value="V=1-104"/>
</dbReference>
<dbReference type="PDB" id="6S0K">
    <property type="method" value="EM"/>
    <property type="resolution" value="3.10 A"/>
    <property type="chains" value="V=1-104"/>
</dbReference>
<dbReference type="PDB" id="6SZS">
    <property type="method" value="EM"/>
    <property type="resolution" value="3.06 A"/>
    <property type="chains" value="U=1-104"/>
</dbReference>
<dbReference type="PDB" id="6TBV">
    <property type="method" value="EM"/>
    <property type="resolution" value="2.70 A"/>
    <property type="chains" value="L241=1-104"/>
</dbReference>
<dbReference type="PDB" id="6TC3">
    <property type="method" value="EM"/>
    <property type="resolution" value="2.70 A"/>
    <property type="chains" value="L241=1-104"/>
</dbReference>
<dbReference type="PDB" id="6U48">
    <property type="method" value="EM"/>
    <property type="resolution" value="2.87 A"/>
    <property type="chains" value="CV=2-103"/>
</dbReference>
<dbReference type="PDB" id="6VU3">
    <property type="method" value="EM"/>
    <property type="resolution" value="3.70 A"/>
    <property type="chains" value="3=2-104"/>
</dbReference>
<dbReference type="PDB" id="6VYQ">
    <property type="method" value="EM"/>
    <property type="resolution" value="3.70 A"/>
    <property type="chains" value="3=1-104"/>
</dbReference>
<dbReference type="PDB" id="6VYR">
    <property type="method" value="EM"/>
    <property type="resolution" value="3.80 A"/>
    <property type="chains" value="3=1-104"/>
</dbReference>
<dbReference type="PDB" id="6VYS">
    <property type="method" value="EM"/>
    <property type="resolution" value="3.70 A"/>
    <property type="chains" value="3=1-104"/>
</dbReference>
<dbReference type="PDB" id="6VYT">
    <property type="method" value="EM"/>
    <property type="resolution" value="14.00 A"/>
    <property type="chains" value="3=1-104"/>
</dbReference>
<dbReference type="PDB" id="6VYU">
    <property type="method" value="EM"/>
    <property type="resolution" value="7.00 A"/>
    <property type="chains" value="3=1-104"/>
</dbReference>
<dbReference type="PDB" id="6VYW">
    <property type="method" value="EM"/>
    <property type="resolution" value="7.00 A"/>
    <property type="chains" value="3=1-104"/>
</dbReference>
<dbReference type="PDB" id="6VYX">
    <property type="method" value="EM"/>
    <property type="resolution" value="9.90 A"/>
    <property type="chains" value="3=1-104"/>
</dbReference>
<dbReference type="PDB" id="6VYY">
    <property type="method" value="EM"/>
    <property type="resolution" value="9.90 A"/>
    <property type="chains" value="3=1-104"/>
</dbReference>
<dbReference type="PDB" id="6VYZ">
    <property type="method" value="EM"/>
    <property type="resolution" value="9.90 A"/>
    <property type="chains" value="3=1-104"/>
</dbReference>
<dbReference type="PDB" id="6VZ2">
    <property type="method" value="EM"/>
    <property type="resolution" value="10.00 A"/>
    <property type="chains" value="3=1-104"/>
</dbReference>
<dbReference type="PDB" id="6VZ3">
    <property type="method" value="EM"/>
    <property type="resolution" value="8.90 A"/>
    <property type="chains" value="3=2-104"/>
</dbReference>
<dbReference type="PDB" id="6VZ5">
    <property type="method" value="EM"/>
    <property type="resolution" value="8.90 A"/>
    <property type="chains" value="3=1-104"/>
</dbReference>
<dbReference type="PDB" id="6VZ7">
    <property type="method" value="EM"/>
    <property type="resolution" value="7.00 A"/>
    <property type="chains" value="3=2-104"/>
</dbReference>
<dbReference type="PDB" id="6VZJ">
    <property type="method" value="EM"/>
    <property type="resolution" value="4.10 A"/>
    <property type="chains" value="3=1-104"/>
</dbReference>
<dbReference type="PDB" id="6WD0">
    <property type="method" value="EM"/>
    <property type="resolution" value="3.00 A"/>
    <property type="chains" value="u=2-103"/>
</dbReference>
<dbReference type="PDB" id="6WD1">
    <property type="method" value="EM"/>
    <property type="resolution" value="3.30 A"/>
    <property type="chains" value="u=2-103"/>
</dbReference>
<dbReference type="PDB" id="6WD2">
    <property type="method" value="EM"/>
    <property type="resolution" value="3.60 A"/>
    <property type="chains" value="u=2-103"/>
</dbReference>
<dbReference type="PDB" id="6WD3">
    <property type="method" value="EM"/>
    <property type="resolution" value="3.60 A"/>
    <property type="chains" value="u=2-103"/>
</dbReference>
<dbReference type="PDB" id="6WD4">
    <property type="method" value="EM"/>
    <property type="resolution" value="3.70 A"/>
    <property type="chains" value="u=2-103"/>
</dbReference>
<dbReference type="PDB" id="6WD5">
    <property type="method" value="EM"/>
    <property type="resolution" value="3.60 A"/>
    <property type="chains" value="u=2-103"/>
</dbReference>
<dbReference type="PDB" id="6WD6">
    <property type="method" value="EM"/>
    <property type="resolution" value="3.70 A"/>
    <property type="chains" value="u=2-103"/>
</dbReference>
<dbReference type="PDB" id="6WD7">
    <property type="method" value="EM"/>
    <property type="resolution" value="3.90 A"/>
    <property type="chains" value="u=2-103"/>
</dbReference>
<dbReference type="PDB" id="6WD8">
    <property type="method" value="EM"/>
    <property type="resolution" value="3.70 A"/>
    <property type="chains" value="u=2-103"/>
</dbReference>
<dbReference type="PDB" id="6WD9">
    <property type="method" value="EM"/>
    <property type="resolution" value="3.70 A"/>
    <property type="chains" value="u=2-103"/>
</dbReference>
<dbReference type="PDB" id="6WDA">
    <property type="method" value="EM"/>
    <property type="resolution" value="3.80 A"/>
    <property type="chains" value="u=2-103"/>
</dbReference>
<dbReference type="PDB" id="6WDB">
    <property type="method" value="EM"/>
    <property type="resolution" value="4.00 A"/>
    <property type="chains" value="u=2-103"/>
</dbReference>
<dbReference type="PDB" id="6WDC">
    <property type="method" value="EM"/>
    <property type="resolution" value="4.20 A"/>
    <property type="chains" value="u=2-103"/>
</dbReference>
<dbReference type="PDB" id="6WDD">
    <property type="method" value="EM"/>
    <property type="resolution" value="3.20 A"/>
    <property type="chains" value="u=2-103"/>
</dbReference>
<dbReference type="PDB" id="6WDE">
    <property type="method" value="EM"/>
    <property type="resolution" value="3.00 A"/>
    <property type="chains" value="u=2-103"/>
</dbReference>
<dbReference type="PDB" id="6WDF">
    <property type="method" value="EM"/>
    <property type="resolution" value="3.30 A"/>
    <property type="chains" value="u=2-103"/>
</dbReference>
<dbReference type="PDB" id="6WDG">
    <property type="method" value="EM"/>
    <property type="resolution" value="3.30 A"/>
    <property type="chains" value="u=2-103"/>
</dbReference>
<dbReference type="PDB" id="6WDH">
    <property type="method" value="EM"/>
    <property type="resolution" value="4.30 A"/>
    <property type="chains" value="u=2-103"/>
</dbReference>
<dbReference type="PDB" id="6WDI">
    <property type="method" value="EM"/>
    <property type="resolution" value="4.00 A"/>
    <property type="chains" value="u=2-103"/>
</dbReference>
<dbReference type="PDB" id="6WDJ">
    <property type="method" value="EM"/>
    <property type="resolution" value="3.70 A"/>
    <property type="chains" value="u=2-103"/>
</dbReference>
<dbReference type="PDB" id="6WDK">
    <property type="method" value="EM"/>
    <property type="resolution" value="3.60 A"/>
    <property type="chains" value="u=2-103"/>
</dbReference>
<dbReference type="PDB" id="6WDL">
    <property type="method" value="EM"/>
    <property type="resolution" value="3.70 A"/>
    <property type="chains" value="u=2-103"/>
</dbReference>
<dbReference type="PDB" id="6WDM">
    <property type="method" value="EM"/>
    <property type="resolution" value="3.60 A"/>
    <property type="chains" value="u=2-103"/>
</dbReference>
<dbReference type="PDB" id="6WNT">
    <property type="method" value="EM"/>
    <property type="resolution" value="3.10 A"/>
    <property type="chains" value="u=2-103"/>
</dbReference>
<dbReference type="PDB" id="6WNV">
    <property type="method" value="EM"/>
    <property type="resolution" value="3.50 A"/>
    <property type="chains" value="u=2-103"/>
</dbReference>
<dbReference type="PDB" id="6WNW">
    <property type="method" value="EM"/>
    <property type="resolution" value="3.20 A"/>
    <property type="chains" value="u=2-103"/>
</dbReference>
<dbReference type="PDB" id="6X6T">
    <property type="method" value="EM"/>
    <property type="resolution" value="3.20 A"/>
    <property type="chains" value="3=1-104"/>
</dbReference>
<dbReference type="PDB" id="6X7F">
    <property type="method" value="EM"/>
    <property type="resolution" value="3.50 A"/>
    <property type="chains" value="3=1-104"/>
</dbReference>
<dbReference type="PDB" id="6X7K">
    <property type="method" value="EM"/>
    <property type="resolution" value="3.10 A"/>
    <property type="chains" value="3=1-104"/>
</dbReference>
<dbReference type="PDB" id="6X9Q">
    <property type="method" value="EM"/>
    <property type="resolution" value="4.80 A"/>
    <property type="chains" value="3=1-104"/>
</dbReference>
<dbReference type="PDB" id="6XDQ">
    <property type="method" value="EM"/>
    <property type="resolution" value="3.70 A"/>
    <property type="chains" value="3=1-104"/>
</dbReference>
<dbReference type="PDB" id="6XDR">
    <property type="method" value="EM"/>
    <property type="resolution" value="4.70 A"/>
    <property type="chains" value="3=1-104"/>
</dbReference>
<dbReference type="PDB" id="6XGF">
    <property type="method" value="EM"/>
    <property type="resolution" value="5.00 A"/>
    <property type="chains" value="3=1-104"/>
</dbReference>
<dbReference type="PDB" id="6XII">
    <property type="method" value="EM"/>
    <property type="resolution" value="7.00 A"/>
    <property type="chains" value="3=1-104"/>
</dbReference>
<dbReference type="PDB" id="6XIJ">
    <property type="method" value="EM"/>
    <property type="resolution" value="8.00 A"/>
    <property type="chains" value="3=1-104"/>
</dbReference>
<dbReference type="PDB" id="6XZ7">
    <property type="method" value="EM"/>
    <property type="resolution" value="2.10 A"/>
    <property type="chains" value="U=2-103"/>
</dbReference>
<dbReference type="PDB" id="6XZA">
    <property type="method" value="EM"/>
    <property type="resolution" value="2.66 A"/>
    <property type="chains" value="U2=2-103"/>
</dbReference>
<dbReference type="PDB" id="6XZB">
    <property type="method" value="EM"/>
    <property type="resolution" value="2.54 A"/>
    <property type="chains" value="U2=2-103"/>
</dbReference>
<dbReference type="PDB" id="6Y69">
    <property type="method" value="EM"/>
    <property type="resolution" value="2.86 A"/>
    <property type="chains" value="U=2-103"/>
</dbReference>
<dbReference type="PDB" id="6YS3">
    <property type="method" value="EM"/>
    <property type="resolution" value="2.58 A"/>
    <property type="chains" value="u=1-104"/>
</dbReference>
<dbReference type="PDB" id="6YSR">
    <property type="method" value="EM"/>
    <property type="resolution" value="3.10 A"/>
    <property type="chains" value="U=1-104"/>
</dbReference>
<dbReference type="PDB" id="6YSS">
    <property type="method" value="EM"/>
    <property type="resolution" value="2.60 A"/>
    <property type="chains" value="U=1-104"/>
</dbReference>
<dbReference type="PDB" id="6YST">
    <property type="method" value="EM"/>
    <property type="resolution" value="3.20 A"/>
    <property type="chains" value="U=1-104"/>
</dbReference>
<dbReference type="PDB" id="6YSU">
    <property type="method" value="EM"/>
    <property type="resolution" value="3.70 A"/>
    <property type="chains" value="U=1-104"/>
</dbReference>
<dbReference type="PDB" id="6ZTJ">
    <property type="method" value="EM"/>
    <property type="resolution" value="3.40 A"/>
    <property type="chains" value="BV=1-104"/>
</dbReference>
<dbReference type="PDB" id="6ZTL">
    <property type="method" value="EM"/>
    <property type="resolution" value="3.50 A"/>
    <property type="chains" value="BV=1-104"/>
</dbReference>
<dbReference type="PDB" id="6ZTM">
    <property type="method" value="EM"/>
    <property type="resolution" value="3.30 A"/>
    <property type="chains" value="BV=1-104"/>
</dbReference>
<dbReference type="PDB" id="6ZTN">
    <property type="method" value="EM"/>
    <property type="resolution" value="3.90 A"/>
    <property type="chains" value="BV=1-104"/>
</dbReference>
<dbReference type="PDB" id="6ZTO">
    <property type="method" value="EM"/>
    <property type="resolution" value="3.00 A"/>
    <property type="chains" value="BV=1-104"/>
</dbReference>
<dbReference type="PDB" id="6ZTP">
    <property type="method" value="EM"/>
    <property type="resolution" value="3.00 A"/>
    <property type="chains" value="BV=1-104"/>
</dbReference>
<dbReference type="PDB" id="6ZU1">
    <property type="method" value="EM"/>
    <property type="resolution" value="3.00 A"/>
    <property type="chains" value="BV=1-104"/>
</dbReference>
<dbReference type="PDB" id="7ABZ">
    <property type="method" value="EM"/>
    <property type="resolution" value="3.21 A"/>
    <property type="chains" value="U=2-103"/>
</dbReference>
<dbReference type="PDB" id="7AC7">
    <property type="method" value="EM"/>
    <property type="resolution" value="3.08 A"/>
    <property type="chains" value="U=2-104"/>
</dbReference>
<dbReference type="PDB" id="7ACJ">
    <property type="method" value="EM"/>
    <property type="resolution" value="3.20 A"/>
    <property type="chains" value="U=2-104"/>
</dbReference>
<dbReference type="PDB" id="7ACR">
    <property type="method" value="EM"/>
    <property type="resolution" value="3.44 A"/>
    <property type="chains" value="U=2-104"/>
</dbReference>
<dbReference type="PDB" id="7B5K">
    <property type="method" value="EM"/>
    <property type="resolution" value="2.90 A"/>
    <property type="chains" value="U=2-103"/>
</dbReference>
<dbReference type="PDB" id="7BL2">
    <property type="method" value="EM"/>
    <property type="resolution" value="3.70 A"/>
    <property type="chains" value="U=1-104"/>
</dbReference>
<dbReference type="PDB" id="7BL3">
    <property type="method" value="EM"/>
    <property type="resolution" value="3.50 A"/>
    <property type="chains" value="U=1-104"/>
</dbReference>
<dbReference type="PDB" id="7BL4">
    <property type="method" value="EM"/>
    <property type="resolution" value="2.40 A"/>
    <property type="chains" value="U=1-104"/>
</dbReference>
<dbReference type="PDB" id="7BL5">
    <property type="method" value="EM"/>
    <property type="resolution" value="3.30 A"/>
    <property type="chains" value="U=1-104"/>
</dbReference>
<dbReference type="PDB" id="7BL6">
    <property type="method" value="EM"/>
    <property type="resolution" value="4.00 A"/>
    <property type="chains" value="U=1-104"/>
</dbReference>
<dbReference type="PDB" id="7BV8">
    <property type="method" value="EM"/>
    <property type="resolution" value="3.14 A"/>
    <property type="chains" value="V=1-104"/>
</dbReference>
<dbReference type="PDB" id="7D6Z">
    <property type="method" value="EM"/>
    <property type="resolution" value="3.40 A"/>
    <property type="chains" value="U=1-104"/>
</dbReference>
<dbReference type="PDB" id="7D80">
    <property type="method" value="EM"/>
    <property type="resolution" value="4.10 A"/>
    <property type="chains" value="s=1-104"/>
</dbReference>
<dbReference type="PDB" id="7JSS">
    <property type="method" value="EM"/>
    <property type="resolution" value="3.70 A"/>
    <property type="chains" value="u=2-103"/>
</dbReference>
<dbReference type="PDB" id="7JSW">
    <property type="method" value="EM"/>
    <property type="resolution" value="3.80 A"/>
    <property type="chains" value="u=2-103"/>
</dbReference>
<dbReference type="PDB" id="7JSZ">
    <property type="method" value="EM"/>
    <property type="resolution" value="3.70 A"/>
    <property type="chains" value="u=2-103"/>
</dbReference>
<dbReference type="PDB" id="7JT1">
    <property type="method" value="EM"/>
    <property type="resolution" value="3.30 A"/>
    <property type="chains" value="u=2-103"/>
</dbReference>
<dbReference type="PDB" id="7JT2">
    <property type="method" value="EM"/>
    <property type="resolution" value="3.50 A"/>
    <property type="chains" value="u=2-103"/>
</dbReference>
<dbReference type="PDB" id="7JT3">
    <property type="method" value="EM"/>
    <property type="resolution" value="3.70 A"/>
    <property type="chains" value="u=2-103"/>
</dbReference>
<dbReference type="PDB" id="7K00">
    <property type="method" value="EM"/>
    <property type="resolution" value="1.98 A"/>
    <property type="chains" value="t=1-104"/>
</dbReference>
<dbReference type="PDB" id="7K50">
    <property type="method" value="EM"/>
    <property type="resolution" value="3.40 A"/>
    <property type="chains" value="u=2-103"/>
</dbReference>
<dbReference type="PDB" id="7K51">
    <property type="method" value="EM"/>
    <property type="resolution" value="3.50 A"/>
    <property type="chains" value="u=2-103"/>
</dbReference>
<dbReference type="PDB" id="7K52">
    <property type="method" value="EM"/>
    <property type="resolution" value="3.40 A"/>
    <property type="chains" value="u=2-103"/>
</dbReference>
<dbReference type="PDB" id="7K53">
    <property type="method" value="EM"/>
    <property type="resolution" value="3.20 A"/>
    <property type="chains" value="u=2-103"/>
</dbReference>
<dbReference type="PDB" id="7K54">
    <property type="method" value="EM"/>
    <property type="resolution" value="3.20 A"/>
    <property type="chains" value="u=2-103"/>
</dbReference>
<dbReference type="PDB" id="7K55">
    <property type="method" value="EM"/>
    <property type="resolution" value="3.30 A"/>
    <property type="chains" value="u=2-103"/>
</dbReference>
<dbReference type="PDB" id="7LV0">
    <property type="method" value="EM"/>
    <property type="resolution" value="3.20 A"/>
    <property type="chains" value="u=2-103"/>
</dbReference>
<dbReference type="PDB" id="7LVK">
    <property type="method" value="EM"/>
    <property type="resolution" value="2.20 A"/>
    <property type="chains" value="c=1-104"/>
</dbReference>
<dbReference type="PDB" id="7M5D">
    <property type="method" value="EM"/>
    <property type="resolution" value="2.80 A"/>
    <property type="chains" value="U=2-104"/>
</dbReference>
<dbReference type="PDB" id="7N1P">
    <property type="method" value="EM"/>
    <property type="resolution" value="2.33 A"/>
    <property type="chains" value="LX=1-104"/>
</dbReference>
<dbReference type="PDB" id="7N2C">
    <property type="method" value="EM"/>
    <property type="resolution" value="2.72 A"/>
    <property type="chains" value="LX=1-104"/>
</dbReference>
<dbReference type="PDB" id="7N2U">
    <property type="method" value="EM"/>
    <property type="resolution" value="2.53 A"/>
    <property type="chains" value="LX=1-104"/>
</dbReference>
<dbReference type="PDB" id="7N2V">
    <property type="method" value="EM"/>
    <property type="resolution" value="2.54 A"/>
    <property type="chains" value="LX=1-104"/>
</dbReference>
<dbReference type="PDB" id="7N30">
    <property type="method" value="EM"/>
    <property type="resolution" value="2.66 A"/>
    <property type="chains" value="LX=1-104"/>
</dbReference>
<dbReference type="PDB" id="7N31">
    <property type="method" value="EM"/>
    <property type="resolution" value="2.69 A"/>
    <property type="chains" value="LX=1-104"/>
</dbReference>
<dbReference type="PDB" id="7NBU">
    <property type="method" value="EM"/>
    <property type="resolution" value="3.11 A"/>
    <property type="chains" value="t=2-103"/>
</dbReference>
<dbReference type="PDB" id="7NWT">
    <property type="method" value="EM"/>
    <property type="resolution" value="2.66 A"/>
    <property type="chains" value="U=1-104"/>
</dbReference>
<dbReference type="PDB" id="7O19">
    <property type="method" value="EM"/>
    <property type="resolution" value="2.90 A"/>
    <property type="chains" value="BU=1-104"/>
</dbReference>
<dbReference type="PDB" id="7O1A">
    <property type="method" value="EM"/>
    <property type="resolution" value="2.40 A"/>
    <property type="chains" value="BU=1-104"/>
</dbReference>
<dbReference type="PDB" id="7O1C">
    <property type="method" value="EM"/>
    <property type="resolution" value="2.60 A"/>
    <property type="chains" value="BU=1-104"/>
</dbReference>
<dbReference type="PDB" id="7ODE">
    <property type="method" value="EM"/>
    <property type="resolution" value="2.84 A"/>
    <property type="chains" value="c=1-104"/>
</dbReference>
<dbReference type="PDB" id="7OIZ">
    <property type="method" value="EM"/>
    <property type="resolution" value="2.90 A"/>
    <property type="chains" value="t=1-104"/>
</dbReference>
<dbReference type="PDB" id="7OJ0">
    <property type="method" value="EM"/>
    <property type="resolution" value="3.50 A"/>
    <property type="chains" value="t=1-104"/>
</dbReference>
<dbReference type="PDB" id="7P3K">
    <property type="method" value="EM"/>
    <property type="resolution" value="2.90 A"/>
    <property type="chains" value="t=1-104"/>
</dbReference>
<dbReference type="PDB" id="7PJS">
    <property type="method" value="EM"/>
    <property type="resolution" value="2.35 A"/>
    <property type="chains" value="U=1-104"/>
</dbReference>
<dbReference type="PDB" id="7PJT">
    <property type="method" value="EM"/>
    <property type="resolution" value="6.00 A"/>
    <property type="chains" value="U=1-104"/>
</dbReference>
<dbReference type="PDB" id="7PJU">
    <property type="method" value="EM"/>
    <property type="resolution" value="9.50 A"/>
    <property type="chains" value="U=1-104"/>
</dbReference>
<dbReference type="PDB" id="7PJV">
    <property type="method" value="EM"/>
    <property type="resolution" value="3.10 A"/>
    <property type="chains" value="U=1-104"/>
</dbReference>
<dbReference type="PDB" id="7PJW">
    <property type="method" value="EM"/>
    <property type="resolution" value="4.00 A"/>
    <property type="chains" value="U=1-104"/>
</dbReference>
<dbReference type="PDB" id="7PJX">
    <property type="method" value="EM"/>
    <property type="resolution" value="6.50 A"/>
    <property type="chains" value="U=1-104"/>
</dbReference>
<dbReference type="PDB" id="7PJY">
    <property type="method" value="EM"/>
    <property type="resolution" value="3.10 A"/>
    <property type="chains" value="U=1-104"/>
</dbReference>
<dbReference type="PDB" id="7PJZ">
    <property type="method" value="EM"/>
    <property type="resolution" value="6.00 A"/>
    <property type="chains" value="U=1-104"/>
</dbReference>
<dbReference type="PDB" id="7Q4K">
    <property type="method" value="EM"/>
    <property type="resolution" value="3.00 A"/>
    <property type="chains" value="BU=1-104"/>
</dbReference>
<dbReference type="PDB" id="7QG8">
    <property type="method" value="EM"/>
    <property type="resolution" value="3.97 A"/>
    <property type="chains" value="h=1-104"/>
</dbReference>
<dbReference type="PDB" id="7QGH">
    <property type="method" value="EM"/>
    <property type="resolution" value="4.48 A"/>
    <property type="chains" value="h=1-104"/>
</dbReference>
<dbReference type="PDB" id="7QGN">
    <property type="method" value="EM"/>
    <property type="resolution" value="3.37 A"/>
    <property type="chains" value="h=1-104"/>
</dbReference>
<dbReference type="PDB" id="7QGR">
    <property type="method" value="EM"/>
    <property type="resolution" value="5.70 A"/>
    <property type="chains" value="h=1-104"/>
</dbReference>
<dbReference type="PDB" id="7QQ3">
    <property type="method" value="EM"/>
    <property type="resolution" value="2.10 A"/>
    <property type="chains" value="c=1-104"/>
</dbReference>
<dbReference type="PDB" id="7S1G">
    <property type="method" value="EM"/>
    <property type="resolution" value="2.48 A"/>
    <property type="chains" value="c=1-104"/>
</dbReference>
<dbReference type="PDB" id="7S1H">
    <property type="method" value="EM"/>
    <property type="resolution" value="2.35 A"/>
    <property type="chains" value="c=1-104"/>
</dbReference>
<dbReference type="PDB" id="7S1I">
    <property type="method" value="EM"/>
    <property type="resolution" value="2.48 A"/>
    <property type="chains" value="c=1-104"/>
</dbReference>
<dbReference type="PDB" id="7S1J">
    <property type="method" value="EM"/>
    <property type="resolution" value="2.47 A"/>
    <property type="chains" value="c=1-104"/>
</dbReference>
<dbReference type="PDB" id="7S1K">
    <property type="method" value="EM"/>
    <property type="resolution" value="2.42 A"/>
    <property type="chains" value="c=1-104"/>
</dbReference>
<dbReference type="PDB" id="7SA4">
    <property type="method" value="EM"/>
    <property type="resolution" value="2.55 A"/>
    <property type="chains" value="U=1-104"/>
</dbReference>
<dbReference type="PDB" id="7SS9">
    <property type="method" value="EM"/>
    <property type="resolution" value="3.90 A"/>
    <property type="chains" value="u=2-103"/>
</dbReference>
<dbReference type="PDB" id="7SSD">
    <property type="method" value="EM"/>
    <property type="resolution" value="3.30 A"/>
    <property type="chains" value="u=2-103"/>
</dbReference>
<dbReference type="PDB" id="7SSL">
    <property type="method" value="EM"/>
    <property type="resolution" value="3.80 A"/>
    <property type="chains" value="u=2-103"/>
</dbReference>
<dbReference type="PDB" id="7SSN">
    <property type="method" value="EM"/>
    <property type="resolution" value="3.20 A"/>
    <property type="chains" value="u=2-103"/>
</dbReference>
<dbReference type="PDB" id="7SSO">
    <property type="method" value="EM"/>
    <property type="resolution" value="3.20 A"/>
    <property type="chains" value="u=2-103"/>
</dbReference>
<dbReference type="PDB" id="7SSW">
    <property type="method" value="EM"/>
    <property type="resolution" value="3.80 A"/>
    <property type="chains" value="u=2-103"/>
</dbReference>
<dbReference type="PDB" id="7ST2">
    <property type="method" value="EM"/>
    <property type="resolution" value="2.90 A"/>
    <property type="chains" value="u=2-103"/>
</dbReference>
<dbReference type="PDB" id="7ST6">
    <property type="method" value="EM"/>
    <property type="resolution" value="3.00 A"/>
    <property type="chains" value="u=2-103"/>
</dbReference>
<dbReference type="PDB" id="7ST7">
    <property type="method" value="EM"/>
    <property type="resolution" value="3.20 A"/>
    <property type="chains" value="u=2-103"/>
</dbReference>
<dbReference type="PDB" id="7TOS">
    <property type="method" value="EM"/>
    <property type="resolution" value="2.90 A"/>
    <property type="chains" value="L24=2-103"/>
</dbReference>
<dbReference type="PDB" id="7UG7">
    <property type="method" value="EM"/>
    <property type="resolution" value="2.58 A"/>
    <property type="chains" value="LX=1-104"/>
</dbReference>
<dbReference type="PDB" id="7UPH">
    <property type="method" value="EM"/>
    <property type="resolution" value="4.18 A"/>
    <property type="chains" value="t=2-103"/>
</dbReference>
<dbReference type="PDB" id="7Y7C">
    <property type="method" value="EM"/>
    <property type="resolution" value="2.51 A"/>
    <property type="chains" value="t=1-104"/>
</dbReference>
<dbReference type="PDB" id="7Y7D">
    <property type="method" value="EM"/>
    <property type="resolution" value="2.58 A"/>
    <property type="chains" value="t=1-104"/>
</dbReference>
<dbReference type="PDB" id="7Y7E">
    <property type="method" value="EM"/>
    <property type="resolution" value="2.41 A"/>
    <property type="chains" value="t=1-104"/>
</dbReference>
<dbReference type="PDB" id="7Y7F">
    <property type="method" value="EM"/>
    <property type="resolution" value="2.43 A"/>
    <property type="chains" value="t=1-104"/>
</dbReference>
<dbReference type="PDB" id="7Y7G">
    <property type="method" value="EM"/>
    <property type="resolution" value="2.34 A"/>
    <property type="chains" value="t=1-104"/>
</dbReference>
<dbReference type="PDB" id="7Y7H">
    <property type="method" value="EM"/>
    <property type="resolution" value="2.51 A"/>
    <property type="chains" value="t=1-104"/>
</dbReference>
<dbReference type="PDB" id="7Z20">
    <property type="method" value="EM"/>
    <property type="resolution" value="2.29 A"/>
    <property type="chains" value="u=1-104"/>
</dbReference>
<dbReference type="PDB" id="7ZOD">
    <property type="method" value="EM"/>
    <property type="resolution" value="2.56 A"/>
    <property type="chains" value="u=1-104"/>
</dbReference>
<dbReference type="PDB" id="7ZP8">
    <property type="method" value="EM"/>
    <property type="resolution" value="2.20 A"/>
    <property type="chains" value="u=1-104"/>
</dbReference>
<dbReference type="PDB" id="7ZQ5">
    <property type="method" value="EM"/>
    <property type="resolution" value="2.70 A"/>
    <property type="chains" value="u=1-104"/>
</dbReference>
<dbReference type="PDB" id="7ZQ6">
    <property type="method" value="EM"/>
    <property type="resolution" value="2.75 A"/>
    <property type="chains" value="u=1-104"/>
</dbReference>
<dbReference type="PDB" id="7ZTA">
    <property type="method" value="EM"/>
    <property type="resolution" value="2.70 A"/>
    <property type="chains" value="L241=2-103"/>
</dbReference>
<dbReference type="PDB" id="8A3L">
    <property type="method" value="EM"/>
    <property type="resolution" value="3.42 A"/>
    <property type="chains" value="t=1-104"/>
</dbReference>
<dbReference type="PDB" id="8AKN">
    <property type="method" value="EM"/>
    <property type="resolution" value="2.30 A"/>
    <property type="chains" value="t=1-104"/>
</dbReference>
<dbReference type="PDB" id="8AM9">
    <property type="method" value="EM"/>
    <property type="resolution" value="2.80 A"/>
    <property type="chains" value="t=1-104"/>
</dbReference>
<dbReference type="PDB" id="8ANA">
    <property type="method" value="EM"/>
    <property type="resolution" value="2.10 A"/>
    <property type="chains" value="t=1-104"/>
</dbReference>
<dbReference type="PDB" id="8AP4">
    <property type="method" value="EM"/>
    <property type="resolution" value="3.00 A"/>
    <property type="chains" value="t=1-104"/>
</dbReference>
<dbReference type="PDB" id="8AYE">
    <property type="method" value="EM"/>
    <property type="resolution" value="1.96 A"/>
    <property type="chains" value="t=1-104"/>
</dbReference>
<dbReference type="PDB" id="8B0X">
    <property type="method" value="EM"/>
    <property type="resolution" value="1.55 A"/>
    <property type="chains" value="t=1-104"/>
</dbReference>
<dbReference type="PDB" id="8B7Y">
    <property type="method" value="EM"/>
    <property type="resolution" value="3.00 A"/>
    <property type="chains" value="c=1-104"/>
</dbReference>
<dbReference type="PDB" id="8BF7">
    <property type="method" value="EM"/>
    <property type="resolution" value="2.33 A"/>
    <property type="chains" value="R=1-104"/>
</dbReference>
<dbReference type="PDB" id="8BGE">
    <property type="method" value="EM"/>
    <property type="resolution" value="2.11 A"/>
    <property type="chains" value="R=1-104"/>
</dbReference>
<dbReference type="PDB" id="8BGH">
    <property type="method" value="EM"/>
    <property type="resolution" value="2.88 A"/>
    <property type="chains" value="R=1-104"/>
</dbReference>
<dbReference type="PDB" id="8BH4">
    <property type="method" value="EM"/>
    <property type="resolution" value="2.62 A"/>
    <property type="chains" value="R=1-104"/>
</dbReference>
<dbReference type="PDB" id="8BHJ">
    <property type="method" value="EM"/>
    <property type="resolution" value="2.81 A"/>
    <property type="chains" value="R=1-104"/>
</dbReference>
<dbReference type="PDB" id="8BHL">
    <property type="method" value="EM"/>
    <property type="resolution" value="2.21 A"/>
    <property type="chains" value="R=1-104"/>
</dbReference>
<dbReference type="PDB" id="8BHN">
    <property type="method" value="EM"/>
    <property type="resolution" value="2.85 A"/>
    <property type="chains" value="R=1-104"/>
</dbReference>
<dbReference type="PDB" id="8BHP">
    <property type="method" value="EM"/>
    <property type="resolution" value="2.37 A"/>
    <property type="chains" value="R=1-104"/>
</dbReference>
<dbReference type="PDB" id="8BIL">
    <property type="method" value="EM"/>
    <property type="resolution" value="2.04 A"/>
    <property type="chains" value="R=1-104"/>
</dbReference>
<dbReference type="PDB" id="8BIM">
    <property type="method" value="EM"/>
    <property type="resolution" value="2.04 A"/>
    <property type="chains" value="R=1-104"/>
</dbReference>
<dbReference type="PDB" id="8C8X">
    <property type="method" value="EM"/>
    <property type="resolution" value="3.93 A"/>
    <property type="chains" value="U=1-104"/>
</dbReference>
<dbReference type="PDB" id="8C8Y">
    <property type="method" value="EM"/>
    <property type="resolution" value="3.03 A"/>
    <property type="chains" value="U=1-104"/>
</dbReference>
<dbReference type="PDB" id="8C8Z">
    <property type="method" value="EM"/>
    <property type="resolution" value="3.12 A"/>
    <property type="chains" value="U=1-104"/>
</dbReference>
<dbReference type="PDB" id="8C90">
    <property type="method" value="EM"/>
    <property type="resolution" value="3.15 A"/>
    <property type="chains" value="U=1-104"/>
</dbReference>
<dbReference type="PDB" id="8C91">
    <property type="method" value="EM"/>
    <property type="resolution" value="4.19 A"/>
    <property type="chains" value="U=1-104"/>
</dbReference>
<dbReference type="PDB" id="8C92">
    <property type="method" value="EM"/>
    <property type="resolution" value="3.79 A"/>
    <property type="chains" value="U=1-104"/>
</dbReference>
<dbReference type="PDB" id="8C93">
    <property type="method" value="EM"/>
    <property type="resolution" value="4.17 A"/>
    <property type="chains" value="U=1-104"/>
</dbReference>
<dbReference type="PDB" id="8C94">
    <property type="method" value="EM"/>
    <property type="resolution" value="3.80 A"/>
    <property type="chains" value="U=1-104"/>
</dbReference>
<dbReference type="PDB" id="8C95">
    <property type="method" value="EM"/>
    <property type="resolution" value="4.92 A"/>
    <property type="chains" value="U=1-104"/>
</dbReference>
<dbReference type="PDB" id="8C96">
    <property type="method" value="EM"/>
    <property type="resolution" value="4.43 A"/>
    <property type="chains" value="U=1-104"/>
</dbReference>
<dbReference type="PDB" id="8C97">
    <property type="method" value="EM"/>
    <property type="resolution" value="4.07 A"/>
    <property type="chains" value="U=1-104"/>
</dbReference>
<dbReference type="PDB" id="8C98">
    <property type="method" value="EM"/>
    <property type="resolution" value="3.66 A"/>
    <property type="chains" value="U=1-104"/>
</dbReference>
<dbReference type="PDB" id="8C99">
    <property type="method" value="EM"/>
    <property type="resolution" value="3.29 A"/>
    <property type="chains" value="U=1-104"/>
</dbReference>
<dbReference type="PDB" id="8C9A">
    <property type="method" value="EM"/>
    <property type="resolution" value="4.86 A"/>
    <property type="chains" value="U=1-104"/>
</dbReference>
<dbReference type="PDB" id="8C9B">
    <property type="method" value="EM"/>
    <property type="resolution" value="5.90 A"/>
    <property type="chains" value="U=1-104"/>
</dbReference>
<dbReference type="PDB" id="8C9C">
    <property type="method" value="EM"/>
    <property type="resolution" value="6.62 A"/>
    <property type="chains" value="U=2-103"/>
</dbReference>
<dbReference type="PDB" id="8CAM">
    <property type="method" value="EM"/>
    <property type="resolution" value="1.86 A"/>
    <property type="chains" value="t=1-104"/>
</dbReference>
<dbReference type="PDB" id="8CEU">
    <property type="method" value="EM"/>
    <property type="resolution" value="1.83 A"/>
    <property type="chains" value="t=1-104"/>
</dbReference>
<dbReference type="PDB" id="8CGD">
    <property type="method" value="EM"/>
    <property type="resolution" value="1.98 A"/>
    <property type="chains" value="t=1-104"/>
</dbReference>
<dbReference type="PDB" id="8CGK">
    <property type="method" value="EM"/>
    <property type="resolution" value="1.64 A"/>
    <property type="chains" value="t=1-104"/>
</dbReference>
<dbReference type="PDB" id="8CGV">
    <property type="method" value="EM"/>
    <property type="resolution" value="1.66 A"/>
    <property type="chains" value="t=1-104"/>
</dbReference>
<dbReference type="PDB" id="8EIU">
    <property type="method" value="EM"/>
    <property type="resolution" value="2.24 A"/>
    <property type="chains" value="t=1-104"/>
</dbReference>
<dbReference type="PDB" id="8EKC">
    <property type="method" value="EM"/>
    <property type="resolution" value="2.70 A"/>
    <property type="chains" value="W=1-104"/>
</dbReference>
<dbReference type="PDB" id="8EMM">
    <property type="method" value="EM"/>
    <property type="resolution" value="2.10 A"/>
    <property type="chains" value="t=1-104"/>
</dbReference>
<dbReference type="PDB" id="8FIZ">
    <property type="method" value="EM"/>
    <property type="resolution" value="3.80 A"/>
    <property type="chains" value="DB=1-104"/>
</dbReference>
<dbReference type="PDB" id="8FTO">
    <property type="method" value="EM"/>
    <property type="resolution" value="1.85 A"/>
    <property type="chains" value="t=1-104"/>
</dbReference>
<dbReference type="PDB" id="8FZD">
    <property type="method" value="EM"/>
    <property type="resolution" value="3.10 A"/>
    <property type="chains" value="W=1-104"/>
</dbReference>
<dbReference type="PDB" id="8FZE">
    <property type="method" value="EM"/>
    <property type="resolution" value="3.00 A"/>
    <property type="chains" value="W=1-104"/>
</dbReference>
<dbReference type="PDB" id="8FZF">
    <property type="method" value="EM"/>
    <property type="resolution" value="3.20 A"/>
    <property type="chains" value="W=1-104"/>
</dbReference>
<dbReference type="PDB" id="8FZG">
    <property type="method" value="EM"/>
    <property type="resolution" value="3.10 A"/>
    <property type="chains" value="W=1-104"/>
</dbReference>
<dbReference type="PDB" id="8FZH">
    <property type="method" value="EM"/>
    <property type="resolution" value="2.90 A"/>
    <property type="chains" value="W=1-104"/>
</dbReference>
<dbReference type="PDB" id="8FZI">
    <property type="method" value="EM"/>
    <property type="resolution" value="3.10 A"/>
    <property type="chains" value="W=1-104"/>
</dbReference>
<dbReference type="PDB" id="8FZJ">
    <property type="method" value="EM"/>
    <property type="resolution" value="3.00 A"/>
    <property type="chains" value="W=1-104"/>
</dbReference>
<dbReference type="PDB" id="8G2U">
    <property type="method" value="EM"/>
    <property type="resolution" value="3.00 A"/>
    <property type="chains" value="U=2-104"/>
</dbReference>
<dbReference type="PDB" id="8G31">
    <property type="method" value="EM"/>
    <property type="resolution" value="3.20 A"/>
    <property type="chains" value="U=2-104"/>
</dbReference>
<dbReference type="PDB" id="8G34">
    <property type="method" value="EM"/>
    <property type="resolution" value="3.20 A"/>
    <property type="chains" value="U=2-104"/>
</dbReference>
<dbReference type="PDB" id="8G38">
    <property type="method" value="EM"/>
    <property type="resolution" value="3.20 A"/>
    <property type="chains" value="U=2-104"/>
</dbReference>
<dbReference type="PDB" id="8G6W">
    <property type="method" value="EM"/>
    <property type="resolution" value="2.02 A"/>
    <property type="chains" value="t=1-104"/>
</dbReference>
<dbReference type="PDB" id="8G6X">
    <property type="method" value="EM"/>
    <property type="resolution" value="2.31 A"/>
    <property type="chains" value="t=1-104"/>
</dbReference>
<dbReference type="PDB" id="8G6Y">
    <property type="method" value="EM"/>
    <property type="resolution" value="2.09 A"/>
    <property type="chains" value="t=1-104"/>
</dbReference>
<dbReference type="PDB" id="8G7P">
    <property type="method" value="EM"/>
    <property type="resolution" value="2.90 A"/>
    <property type="chains" value="W=1-104"/>
</dbReference>
<dbReference type="PDB" id="8G7Q">
    <property type="method" value="EM"/>
    <property type="resolution" value="3.10 A"/>
    <property type="chains" value="W=1-104"/>
</dbReference>
<dbReference type="PDB" id="8G7R">
    <property type="method" value="EM"/>
    <property type="resolution" value="2.80 A"/>
    <property type="chains" value="W=1-104"/>
</dbReference>
<dbReference type="PDB" id="8G7S">
    <property type="method" value="EM"/>
    <property type="resolution" value="3.10 A"/>
    <property type="chains" value="W=1-104"/>
</dbReference>
<dbReference type="PDB" id="8HSP">
    <property type="method" value="EM"/>
    <property type="resolution" value="2.32 A"/>
    <property type="chains" value="t=1-104"/>
</dbReference>
<dbReference type="PDB" id="8HTZ">
    <property type="method" value="EM"/>
    <property type="resolution" value="2.40 A"/>
    <property type="chains" value="t=1-104"/>
</dbReference>
<dbReference type="PDB" id="8HU1">
    <property type="method" value="EM"/>
    <property type="resolution" value="2.69 A"/>
    <property type="chains" value="t=1-104"/>
</dbReference>
<dbReference type="PDB" id="8IFB">
    <property type="method" value="EM"/>
    <property type="resolution" value="2.43 A"/>
    <property type="chains" value="t=1-104"/>
</dbReference>
<dbReference type="PDB" id="8IFC">
    <property type="method" value="EM"/>
    <property type="resolution" value="2.90 A"/>
    <property type="chains" value="t=1-104"/>
</dbReference>
<dbReference type="PDB" id="8J1Z">
    <property type="method" value="EM"/>
    <property type="resolution" value="2.60 A"/>
    <property type="chains" value="t=1-104"/>
</dbReference>
<dbReference type="PDB" id="8P16">
    <property type="method" value="EM"/>
    <property type="resolution" value="2.77 A"/>
    <property type="chains" value="U=1-104"/>
</dbReference>
<dbReference type="PDB" id="8P17">
    <property type="method" value="EM"/>
    <property type="resolution" value="2.78 A"/>
    <property type="chains" value="U=1-104"/>
</dbReference>
<dbReference type="PDB" id="8P18">
    <property type="method" value="EM"/>
    <property type="resolution" value="2.77 A"/>
    <property type="chains" value="U=1-104"/>
</dbReference>
<dbReference type="PDB" id="8PEG">
    <property type="method" value="EM"/>
    <property type="resolution" value="3.30 A"/>
    <property type="chains" value="x=1-104"/>
</dbReference>
<dbReference type="PDB" id="8PHJ">
    <property type="method" value="EM"/>
    <property type="resolution" value="3.67 A"/>
    <property type="chains" value="t=1-104"/>
</dbReference>
<dbReference type="PDB" id="8PKL">
    <property type="method" value="EM"/>
    <property type="resolution" value="3.09 A"/>
    <property type="chains" value="x=1-104"/>
</dbReference>
<dbReference type="PDB" id="8PVA">
    <property type="method" value="EM"/>
    <property type="resolution" value="4.50 A"/>
    <property type="chains" value="t=1-104"/>
</dbReference>
<dbReference type="PDB" id="8Q4F">
    <property type="method" value="EM"/>
    <property type="resolution" value="3.10 A"/>
    <property type="chains" value="t=1-104"/>
</dbReference>
<dbReference type="PDB" id="8QBT">
    <property type="method" value="EM"/>
    <property type="resolution" value="2.20 A"/>
    <property type="chains" value="U=1-104"/>
</dbReference>
<dbReference type="PDB" id="8QK7">
    <property type="method" value="EM"/>
    <property type="resolution" value="2.77 A"/>
    <property type="chains" value="U=1-104"/>
</dbReference>
<dbReference type="PDB" id="8QOA">
    <property type="method" value="EM"/>
    <property type="resolution" value="2.00 A"/>
    <property type="chains" value="t=1-104"/>
</dbReference>
<dbReference type="PDB" id="8R6C">
    <property type="method" value="EM"/>
    <property type="resolution" value="2.20 A"/>
    <property type="chains" value="t=1-104"/>
</dbReference>
<dbReference type="PDB" id="8R8M">
    <property type="method" value="EM"/>
    <property type="resolution" value="2.40 A"/>
    <property type="chains" value="t=1-104"/>
</dbReference>
<dbReference type="PDB" id="8RPY">
    <property type="method" value="EM"/>
    <property type="resolution" value="2.64 A"/>
    <property type="chains" value="U=2-103"/>
</dbReference>
<dbReference type="PDB" id="8RPZ">
    <property type="method" value="EM"/>
    <property type="resolution" value="2.44 A"/>
    <property type="chains" value="U=2-103"/>
</dbReference>
<dbReference type="PDB" id="8RQ0">
    <property type="method" value="EM"/>
    <property type="resolution" value="2.44 A"/>
    <property type="chains" value="U=2-103"/>
</dbReference>
<dbReference type="PDB" id="8RQ2">
    <property type="method" value="EM"/>
    <property type="resolution" value="2.44 A"/>
    <property type="chains" value="U=2-103"/>
</dbReference>
<dbReference type="PDB" id="8SYL">
    <property type="method" value="EM"/>
    <property type="resolution" value="2.90 A"/>
    <property type="chains" value="W=1-104"/>
</dbReference>
<dbReference type="PDB" id="8T5D">
    <property type="method" value="EM"/>
    <property type="resolution" value="3.20 A"/>
    <property type="chains" value="U=2-104"/>
</dbReference>
<dbReference type="PDB" id="8T5H">
    <property type="method" value="EM"/>
    <property type="resolution" value="3.30 A"/>
    <property type="chains" value="U=2-104"/>
</dbReference>
<dbReference type="PDB" id="8UPO">
    <property type="method" value="EM"/>
    <property type="resolution" value="5.50 A"/>
    <property type="chains" value="3=1-104"/>
</dbReference>
<dbReference type="PDB" id="8UPR">
    <property type="method" value="EM"/>
    <property type="resolution" value="5.30 A"/>
    <property type="chains" value="3=1-104"/>
</dbReference>
<dbReference type="PDB" id="8UQL">
    <property type="method" value="EM"/>
    <property type="resolution" value="3.20 A"/>
    <property type="chains" value="3=1-104"/>
</dbReference>
<dbReference type="PDB" id="8UQM">
    <property type="method" value="EM"/>
    <property type="resolution" value="5.30 A"/>
    <property type="chains" value="3=1-104"/>
</dbReference>
<dbReference type="PDB" id="8UQP">
    <property type="method" value="EM"/>
    <property type="resolution" value="3.80 A"/>
    <property type="chains" value="3=1-104"/>
</dbReference>
<dbReference type="PDB" id="8UR0">
    <property type="method" value="EM"/>
    <property type="resolution" value="3.40 A"/>
    <property type="chains" value="3=1-104"/>
</dbReference>
<dbReference type="PDB" id="8URH">
    <property type="method" value="EM"/>
    <property type="resolution" value="5.70 A"/>
    <property type="chains" value="3=1-104"/>
</dbReference>
<dbReference type="PDB" id="8URI">
    <property type="method" value="EM"/>
    <property type="resolution" value="5.30 A"/>
    <property type="chains" value="3=1-104"/>
</dbReference>
<dbReference type="PDB" id="8URX">
    <property type="method" value="EM"/>
    <property type="resolution" value="6.60 A"/>
    <property type="chains" value="3=1-104"/>
</dbReference>
<dbReference type="PDB" id="8URY">
    <property type="method" value="EM"/>
    <property type="resolution" value="3.10 A"/>
    <property type="chains" value="3=1-104"/>
</dbReference>
<dbReference type="PDB" id="8VS9">
    <property type="method" value="EM"/>
    <property type="resolution" value="3.90 A"/>
    <property type="chains" value="L24=1-104"/>
</dbReference>
<dbReference type="PDB" id="8VSA">
    <property type="method" value="EM"/>
    <property type="resolution" value="3.70 A"/>
    <property type="chains" value="L24=1-104"/>
</dbReference>
<dbReference type="PDB" id="8W51">
    <property type="method" value="EM"/>
    <property type="resolution" value="2.40 A"/>
    <property type="chains" value="V=1-104"/>
</dbReference>
<dbReference type="PDB" id="8YUO">
    <property type="method" value="EM"/>
    <property type="resolution" value="2.25 A"/>
    <property type="chains" value="t=1-104"/>
</dbReference>
<dbReference type="PDB" id="8YUP">
    <property type="method" value="EM"/>
    <property type="resolution" value="2.39 A"/>
    <property type="chains" value="t=1-104"/>
</dbReference>
<dbReference type="PDB" id="8YUQ">
    <property type="method" value="EM"/>
    <property type="resolution" value="2.41 A"/>
    <property type="chains" value="t=1-104"/>
</dbReference>
<dbReference type="PDB" id="8YUR">
    <property type="method" value="EM"/>
    <property type="resolution" value="2.47 A"/>
    <property type="chains" value="t=1-104"/>
</dbReference>
<dbReference type="PDB" id="8YUS">
    <property type="method" value="EM"/>
    <property type="resolution" value="2.43 A"/>
    <property type="chains" value="t=1-104"/>
</dbReference>
<dbReference type="PDB" id="9CL9">
    <property type="method" value="EM"/>
    <property type="resolution" value="5.04 A"/>
    <property type="chains" value="U=2-103"/>
</dbReference>
<dbReference type="PDB" id="9D89">
    <property type="method" value="EM"/>
    <property type="resolution" value="1.95 A"/>
    <property type="chains" value="t=2-103"/>
</dbReference>
<dbReference type="PDB" id="9FBV">
    <property type="method" value="EM"/>
    <property type="resolution" value="2.40 A"/>
    <property type="chains" value="t=1-104"/>
</dbReference>
<dbReference type="PDB" id="9GFT">
    <property type="method" value="EM"/>
    <property type="resolution" value="3.10 A"/>
    <property type="chains" value="Ap/h=1-104"/>
</dbReference>
<dbReference type="PDB" id="9GGR">
    <property type="method" value="EM"/>
    <property type="resolution" value="3.20 A"/>
    <property type="chains" value="Ap/h=1-104"/>
</dbReference>
<dbReference type="PDB" id="9H3K">
    <property type="method" value="EM"/>
    <property type="resolution" value="6.62 A"/>
    <property type="chains" value="U=2-103"/>
</dbReference>
<dbReference type="PDB" id="9H3L">
    <property type="method" value="EM"/>
    <property type="resolution" value="5.84 A"/>
    <property type="chains" value="U=2-103"/>
</dbReference>
<dbReference type="PDB" id="9H3M">
    <property type="method" value="EM"/>
    <property type="resolution" value="4.41 A"/>
    <property type="chains" value="U=2-103"/>
</dbReference>
<dbReference type="PDB" id="9H3N">
    <property type="method" value="EM"/>
    <property type="resolution" value="3.69 A"/>
    <property type="chains" value="U=2-103"/>
</dbReference>
<dbReference type="PDB" id="9H3O">
    <property type="method" value="EM"/>
    <property type="resolution" value="4.54 A"/>
    <property type="chains" value="U=2-103"/>
</dbReference>
<dbReference type="PDB" id="9H3P">
    <property type="method" value="EM"/>
    <property type="resolution" value="7.06 A"/>
    <property type="chains" value="U=2-103"/>
</dbReference>
<dbReference type="PDB" id="9H3Q">
    <property type="method" value="EM"/>
    <property type="resolution" value="4.02 A"/>
    <property type="chains" value="U=2-103"/>
</dbReference>
<dbReference type="PDB" id="9H3R">
    <property type="method" value="EM"/>
    <property type="resolution" value="4.12 A"/>
    <property type="chains" value="U=2-103"/>
</dbReference>
<dbReference type="PDB" id="9H3S">
    <property type="method" value="EM"/>
    <property type="resolution" value="4.16 A"/>
    <property type="chains" value="U=2-103"/>
</dbReference>
<dbReference type="PDB" id="9H3T">
    <property type="method" value="EM"/>
    <property type="resolution" value="3.85 A"/>
    <property type="chains" value="U=2-103"/>
</dbReference>
<dbReference type="PDB" id="9H3U">
    <property type="method" value="EM"/>
    <property type="resolution" value="3.47 A"/>
    <property type="chains" value="U=2-103"/>
</dbReference>
<dbReference type="PDB" id="9H3V">
    <property type="method" value="EM"/>
    <property type="resolution" value="3.55 A"/>
    <property type="chains" value="U=2-103"/>
</dbReference>
<dbReference type="PDB" id="9H3W">
    <property type="method" value="EM"/>
    <property type="resolution" value="5.38 A"/>
    <property type="chains" value="U=2-103"/>
</dbReference>
<dbReference type="PDB" id="9H3X">
    <property type="method" value="EM"/>
    <property type="resolution" value="4.12 A"/>
    <property type="chains" value="U=2-103"/>
</dbReference>
<dbReference type="PDB" id="9H3Y">
    <property type="method" value="EM"/>
    <property type="resolution" value="3.09 A"/>
    <property type="chains" value="U=2-103"/>
</dbReference>
<dbReference type="PDB" id="9H3Z">
    <property type="method" value="EM"/>
    <property type="resolution" value="2.98 A"/>
    <property type="chains" value="U=2-103"/>
</dbReference>
<dbReference type="PDB" id="9HA1">
    <property type="method" value="EM"/>
    <property type="resolution" value="4.17 A"/>
    <property type="chains" value="U=2-103"/>
</dbReference>
<dbReference type="PDB" id="9HA2">
    <property type="method" value="EM"/>
    <property type="resolution" value="4.17 A"/>
    <property type="chains" value="U=2-103"/>
</dbReference>
<dbReference type="PDB" id="9HA3">
    <property type="method" value="EM"/>
    <property type="resolution" value="3.62 A"/>
    <property type="chains" value="U=2-103"/>
</dbReference>
<dbReference type="PDB" id="9HA4">
    <property type="method" value="EM"/>
    <property type="resolution" value="4.26 A"/>
    <property type="chains" value="U=2-103"/>
</dbReference>
<dbReference type="PDB" id="9HA5">
    <property type="method" value="EM"/>
    <property type="resolution" value="3.30 A"/>
    <property type="chains" value="U=2-103"/>
</dbReference>
<dbReference type="PDB" id="9HA6">
    <property type="method" value="EM"/>
    <property type="resolution" value="3.08 A"/>
    <property type="chains" value="U=2-103"/>
</dbReference>
<dbReference type="PDB" id="9HA7">
    <property type="method" value="EM"/>
    <property type="resolution" value="4.37 A"/>
    <property type="chains" value="U=2-103"/>
</dbReference>
<dbReference type="PDB" id="9HAI">
    <property type="method" value="EM"/>
    <property type="resolution" value="3.01 A"/>
    <property type="chains" value="U=2-103"/>
</dbReference>
<dbReference type="PDB" id="9HAL">
    <property type="method" value="EM"/>
    <property type="resolution" value="4.49 A"/>
    <property type="chains" value="U=2-103"/>
</dbReference>
<dbReference type="PDB" id="9HAM">
    <property type="method" value="EM"/>
    <property type="resolution" value="5.06 A"/>
    <property type="chains" value="U=2-103"/>
</dbReference>
<dbReference type="PDB" id="9MOR">
    <property type="method" value="EM"/>
    <property type="resolution" value="2.65 A"/>
    <property type="chains" value="U=1-104"/>
</dbReference>
<dbReference type="PDB" id="9MQ4">
    <property type="method" value="EM"/>
    <property type="resolution" value="2.78 A"/>
    <property type="chains" value="U=1-104"/>
</dbReference>
<dbReference type="PDBsum" id="1ML5"/>
<dbReference type="PDBsum" id="2J28"/>
<dbReference type="PDBsum" id="2RDO"/>
<dbReference type="PDBsum" id="2VRH"/>
<dbReference type="PDBsum" id="3BBX"/>
<dbReference type="PDBsum" id="3J45"/>
<dbReference type="PDBsum" id="3J46"/>
<dbReference type="PDBsum" id="3J5L"/>
<dbReference type="PDBsum" id="3J7Z"/>
<dbReference type="PDBsum" id="3J8G"/>
<dbReference type="PDBsum" id="3J9Y"/>
<dbReference type="PDBsum" id="3J9Z"/>
<dbReference type="PDBsum" id="3JA1"/>
<dbReference type="PDBsum" id="3JBU"/>
<dbReference type="PDBsum" id="3JBV"/>
<dbReference type="PDBsum" id="3JCD"/>
<dbReference type="PDBsum" id="3JCE"/>
<dbReference type="PDBsum" id="3JCJ"/>
<dbReference type="PDBsum" id="3JCN"/>
<dbReference type="PDBsum" id="4CSU"/>
<dbReference type="PDBsum" id="4U1U"/>
<dbReference type="PDBsum" id="4U1V"/>
<dbReference type="PDBsum" id="4U20"/>
<dbReference type="PDBsum" id="4U24"/>
<dbReference type="PDBsum" id="4U25"/>
<dbReference type="PDBsum" id="4U26"/>
<dbReference type="PDBsum" id="4U27"/>
<dbReference type="PDBsum" id="4UY8"/>
<dbReference type="PDBsum" id="4V47"/>
<dbReference type="PDBsum" id="4V48"/>
<dbReference type="PDBsum" id="4V4H"/>
<dbReference type="PDBsum" id="4V4Q"/>
<dbReference type="PDBsum" id="4V4V"/>
<dbReference type="PDBsum" id="4V4W"/>
<dbReference type="PDBsum" id="4V50"/>
<dbReference type="PDBsum" id="4V52"/>
<dbReference type="PDBsum" id="4V53"/>
<dbReference type="PDBsum" id="4V54"/>
<dbReference type="PDBsum" id="4V55"/>
<dbReference type="PDBsum" id="4V56"/>
<dbReference type="PDBsum" id="4V57"/>
<dbReference type="PDBsum" id="4V5B"/>
<dbReference type="PDBsum" id="4V5H"/>
<dbReference type="PDBsum" id="4V5Y"/>
<dbReference type="PDBsum" id="4V64"/>
<dbReference type="PDBsum" id="4V65"/>
<dbReference type="PDBsum" id="4V66"/>
<dbReference type="PDBsum" id="4V69"/>
<dbReference type="PDBsum" id="4V6C"/>
<dbReference type="PDBsum" id="4V6D"/>
<dbReference type="PDBsum" id="4V6E"/>
<dbReference type="PDBsum" id="4V6K"/>
<dbReference type="PDBsum" id="4V6L"/>
<dbReference type="PDBsum" id="4V6M"/>
<dbReference type="PDBsum" id="4V6N"/>
<dbReference type="PDBsum" id="4V6O"/>
<dbReference type="PDBsum" id="4V6P"/>
<dbReference type="PDBsum" id="4V6Q"/>
<dbReference type="PDBsum" id="4V6R"/>
<dbReference type="PDBsum" id="4V6S"/>
<dbReference type="PDBsum" id="4V6T"/>
<dbReference type="PDBsum" id="4V6V"/>
<dbReference type="PDBsum" id="4V6Y"/>
<dbReference type="PDBsum" id="4V6Z"/>
<dbReference type="PDBsum" id="4V70"/>
<dbReference type="PDBsum" id="4V71"/>
<dbReference type="PDBsum" id="4V72"/>
<dbReference type="PDBsum" id="4V73"/>
<dbReference type="PDBsum" id="4V74"/>
<dbReference type="PDBsum" id="4V75"/>
<dbReference type="PDBsum" id="4V76"/>
<dbReference type="PDBsum" id="4V77"/>
<dbReference type="PDBsum" id="4V78"/>
<dbReference type="PDBsum" id="4V79"/>
<dbReference type="PDBsum" id="4V7A"/>
<dbReference type="PDBsum" id="4V7B"/>
<dbReference type="PDBsum" id="4V7C"/>
<dbReference type="PDBsum" id="4V7D"/>
<dbReference type="PDBsum" id="4V7I"/>
<dbReference type="PDBsum" id="4V7S"/>
<dbReference type="PDBsum" id="4V7T"/>
<dbReference type="PDBsum" id="4V7U"/>
<dbReference type="PDBsum" id="4V7V"/>
<dbReference type="PDBsum" id="4V85"/>
<dbReference type="PDBsum" id="4V89"/>
<dbReference type="PDBsum" id="4V9C"/>
<dbReference type="PDBsum" id="4V9D"/>
<dbReference type="PDBsum" id="4V9O"/>
<dbReference type="PDBsum" id="4V9P"/>
<dbReference type="PDBsum" id="4WF1"/>
<dbReference type="PDBsum" id="4WOI"/>
<dbReference type="PDBsum" id="4WWW"/>
<dbReference type="PDBsum" id="4YBB"/>
<dbReference type="PDBsum" id="5ADY"/>
<dbReference type="PDBsum" id="5AFI"/>
<dbReference type="PDBsum" id="5AKA"/>
<dbReference type="PDBsum" id="5GAD"/>
<dbReference type="PDBsum" id="5GAE"/>
<dbReference type="PDBsum" id="5GAF"/>
<dbReference type="PDBsum" id="5GAG"/>
<dbReference type="PDBsum" id="5GAH"/>
<dbReference type="PDBsum" id="5H5U"/>
<dbReference type="PDBsum" id="5IQR"/>
<dbReference type="PDBsum" id="5IT8"/>
<dbReference type="PDBsum" id="5J5B"/>
<dbReference type="PDBsum" id="5J7L"/>
<dbReference type="PDBsum" id="5J88"/>
<dbReference type="PDBsum" id="5J8A"/>
<dbReference type="PDBsum" id="5J91"/>
<dbReference type="PDBsum" id="5JC9"/>
<dbReference type="PDBsum" id="5JTE"/>
<dbReference type="PDBsum" id="5JU8"/>
<dbReference type="PDBsum" id="5KCR"/>
<dbReference type="PDBsum" id="5KCS"/>
<dbReference type="PDBsum" id="5KPS"/>
<dbReference type="PDBsum" id="5KPV"/>
<dbReference type="PDBsum" id="5KPW"/>
<dbReference type="PDBsum" id="5KPX"/>
<dbReference type="PDBsum" id="5L3P"/>
<dbReference type="PDBsum" id="5LZA"/>
<dbReference type="PDBsum" id="5LZB"/>
<dbReference type="PDBsum" id="5LZC"/>
<dbReference type="PDBsum" id="5LZD"/>
<dbReference type="PDBsum" id="5LZE"/>
<dbReference type="PDBsum" id="5LZF"/>
<dbReference type="PDBsum" id="5MDV"/>
<dbReference type="PDBsum" id="5MDW"/>
<dbReference type="PDBsum" id="5MDY"/>
<dbReference type="PDBsum" id="5MDZ"/>
<dbReference type="PDBsum" id="5MGP"/>
<dbReference type="PDBsum" id="5NCO"/>
<dbReference type="PDBsum" id="5NP6"/>
<dbReference type="PDBsum" id="5NWY"/>
<dbReference type="PDBsum" id="5O2R"/>
<dbReference type="PDBsum" id="5U4I"/>
<dbReference type="PDBsum" id="5U9F"/>
<dbReference type="PDBsum" id="5U9G"/>
<dbReference type="PDBsum" id="5UYK"/>
<dbReference type="PDBsum" id="5UYL"/>
<dbReference type="PDBsum" id="5UYM"/>
<dbReference type="PDBsum" id="5UYN"/>
<dbReference type="PDBsum" id="5UYP"/>
<dbReference type="PDBsum" id="5UYQ"/>
<dbReference type="PDBsum" id="5WDT"/>
<dbReference type="PDBsum" id="5WE4"/>
<dbReference type="PDBsum" id="5WE6"/>
<dbReference type="PDBsum" id="5WF0"/>
<dbReference type="PDBsum" id="5WFK"/>
<dbReference type="PDBsum" id="5WFS"/>
<dbReference type="PDBsum" id="6BU8"/>
<dbReference type="PDBsum" id="6BY1"/>
<dbReference type="PDBsum" id="6C4I"/>
<dbReference type="PDBsum" id="6DNC"/>
<dbReference type="PDBsum" id="6ENF"/>
<dbReference type="PDBsum" id="6ENJ"/>
<dbReference type="PDBsum" id="6ENU"/>
<dbReference type="PDBsum" id="6GBZ"/>
<dbReference type="PDBsum" id="6GC0"/>
<dbReference type="PDBsum" id="6GC4"/>
<dbReference type="PDBsum" id="6GC6"/>
<dbReference type="PDBsum" id="6GC7"/>
<dbReference type="PDBsum" id="6GC8"/>
<dbReference type="PDBsum" id="6GWT"/>
<dbReference type="PDBsum" id="6GXM"/>
<dbReference type="PDBsum" id="6GXN"/>
<dbReference type="PDBsum" id="6GXO"/>
<dbReference type="PDBsum" id="6GXP"/>
<dbReference type="PDBsum" id="6H4N"/>
<dbReference type="PDBsum" id="6H58"/>
<dbReference type="PDBsum" id="6HRM"/>
<dbReference type="PDBsum" id="6I0Y"/>
<dbReference type="PDBsum" id="6I7V"/>
<dbReference type="PDBsum" id="6O9J"/>
<dbReference type="PDBsum" id="6O9K"/>
<dbReference type="PDBsum" id="6OFX"/>
<dbReference type="PDBsum" id="6OG7"/>
<dbReference type="PDBsum" id="6OGF"/>
<dbReference type="PDBsum" id="6OGG"/>
<dbReference type="PDBsum" id="6OGI"/>
<dbReference type="PDBsum" id="6OM6"/>
<dbReference type="PDBsum" id="6ORE"/>
<dbReference type="PDBsum" id="6ORL"/>
<dbReference type="PDBsum" id="6OSK"/>
<dbReference type="PDBsum" id="6OSQ"/>
<dbReference type="PDBsum" id="6OST"/>
<dbReference type="PDBsum" id="6OT3"/>
<dbReference type="PDBsum" id="6OUO"/>
<dbReference type="PDBsum" id="6PJ6"/>
<dbReference type="PDBsum" id="6Q97"/>
<dbReference type="PDBsum" id="6Q98"/>
<dbReference type="PDBsum" id="6Q9A"/>
<dbReference type="PDBsum" id="6QDW"/>
<dbReference type="PDBsum" id="6QUL"/>
<dbReference type="PDBsum" id="6S0K"/>
<dbReference type="PDBsum" id="6SZS"/>
<dbReference type="PDBsum" id="6TBV"/>
<dbReference type="PDBsum" id="6TC3"/>
<dbReference type="PDBsum" id="6U48"/>
<dbReference type="PDBsum" id="6VU3"/>
<dbReference type="PDBsum" id="6VYQ"/>
<dbReference type="PDBsum" id="6VYR"/>
<dbReference type="PDBsum" id="6VYS"/>
<dbReference type="PDBsum" id="6VYT"/>
<dbReference type="PDBsum" id="6VYU"/>
<dbReference type="PDBsum" id="6VYW"/>
<dbReference type="PDBsum" id="6VYX"/>
<dbReference type="PDBsum" id="6VYY"/>
<dbReference type="PDBsum" id="6VYZ"/>
<dbReference type="PDBsum" id="6VZ2"/>
<dbReference type="PDBsum" id="6VZ3"/>
<dbReference type="PDBsum" id="6VZ5"/>
<dbReference type="PDBsum" id="6VZ7"/>
<dbReference type="PDBsum" id="6VZJ"/>
<dbReference type="PDBsum" id="6WD0"/>
<dbReference type="PDBsum" id="6WD1"/>
<dbReference type="PDBsum" id="6WD2"/>
<dbReference type="PDBsum" id="6WD3"/>
<dbReference type="PDBsum" id="6WD4"/>
<dbReference type="PDBsum" id="6WD5"/>
<dbReference type="PDBsum" id="6WD6"/>
<dbReference type="PDBsum" id="6WD7"/>
<dbReference type="PDBsum" id="6WD8"/>
<dbReference type="PDBsum" id="6WD9"/>
<dbReference type="PDBsum" id="6WDA"/>
<dbReference type="PDBsum" id="6WDB"/>
<dbReference type="PDBsum" id="6WDC"/>
<dbReference type="PDBsum" id="6WDD"/>
<dbReference type="PDBsum" id="6WDE"/>
<dbReference type="PDBsum" id="6WDF"/>
<dbReference type="PDBsum" id="6WDG"/>
<dbReference type="PDBsum" id="6WDH"/>
<dbReference type="PDBsum" id="6WDI"/>
<dbReference type="PDBsum" id="6WDJ"/>
<dbReference type="PDBsum" id="6WDK"/>
<dbReference type="PDBsum" id="6WDL"/>
<dbReference type="PDBsum" id="6WDM"/>
<dbReference type="PDBsum" id="6WNT"/>
<dbReference type="PDBsum" id="6WNV"/>
<dbReference type="PDBsum" id="6WNW"/>
<dbReference type="PDBsum" id="6X6T"/>
<dbReference type="PDBsum" id="6X7F"/>
<dbReference type="PDBsum" id="6X7K"/>
<dbReference type="PDBsum" id="6X9Q"/>
<dbReference type="PDBsum" id="6XDQ"/>
<dbReference type="PDBsum" id="6XDR"/>
<dbReference type="PDBsum" id="6XGF"/>
<dbReference type="PDBsum" id="6XII"/>
<dbReference type="PDBsum" id="6XIJ"/>
<dbReference type="PDBsum" id="6XZ7"/>
<dbReference type="PDBsum" id="6XZA"/>
<dbReference type="PDBsum" id="6XZB"/>
<dbReference type="PDBsum" id="6Y69"/>
<dbReference type="PDBsum" id="6YS3"/>
<dbReference type="PDBsum" id="6YSR"/>
<dbReference type="PDBsum" id="6YSS"/>
<dbReference type="PDBsum" id="6YST"/>
<dbReference type="PDBsum" id="6YSU"/>
<dbReference type="PDBsum" id="6ZTJ"/>
<dbReference type="PDBsum" id="6ZTL"/>
<dbReference type="PDBsum" id="6ZTM"/>
<dbReference type="PDBsum" id="6ZTN"/>
<dbReference type="PDBsum" id="6ZTO"/>
<dbReference type="PDBsum" id="6ZTP"/>
<dbReference type="PDBsum" id="6ZU1"/>
<dbReference type="PDBsum" id="7ABZ"/>
<dbReference type="PDBsum" id="7AC7"/>
<dbReference type="PDBsum" id="7ACJ"/>
<dbReference type="PDBsum" id="7ACR"/>
<dbReference type="PDBsum" id="7B5K"/>
<dbReference type="PDBsum" id="7BL2"/>
<dbReference type="PDBsum" id="7BL3"/>
<dbReference type="PDBsum" id="7BL4"/>
<dbReference type="PDBsum" id="7BL5"/>
<dbReference type="PDBsum" id="7BL6"/>
<dbReference type="PDBsum" id="7BV8"/>
<dbReference type="PDBsum" id="7D6Z"/>
<dbReference type="PDBsum" id="7D80"/>
<dbReference type="PDBsum" id="7JSS"/>
<dbReference type="PDBsum" id="7JSW"/>
<dbReference type="PDBsum" id="7JSZ"/>
<dbReference type="PDBsum" id="7JT1"/>
<dbReference type="PDBsum" id="7JT2"/>
<dbReference type="PDBsum" id="7JT3"/>
<dbReference type="PDBsum" id="7K00"/>
<dbReference type="PDBsum" id="7K50"/>
<dbReference type="PDBsum" id="7K51"/>
<dbReference type="PDBsum" id="7K52"/>
<dbReference type="PDBsum" id="7K53"/>
<dbReference type="PDBsum" id="7K54"/>
<dbReference type="PDBsum" id="7K55"/>
<dbReference type="PDBsum" id="7LV0"/>
<dbReference type="PDBsum" id="7LVK"/>
<dbReference type="PDBsum" id="7M5D"/>
<dbReference type="PDBsum" id="7N1P"/>
<dbReference type="PDBsum" id="7N2C"/>
<dbReference type="PDBsum" id="7N2U"/>
<dbReference type="PDBsum" id="7N2V"/>
<dbReference type="PDBsum" id="7N30"/>
<dbReference type="PDBsum" id="7N31"/>
<dbReference type="PDBsum" id="7NBU"/>
<dbReference type="PDBsum" id="7NWT"/>
<dbReference type="PDBsum" id="7O19"/>
<dbReference type="PDBsum" id="7O1A"/>
<dbReference type="PDBsum" id="7O1C"/>
<dbReference type="PDBsum" id="7ODE"/>
<dbReference type="PDBsum" id="7OIZ"/>
<dbReference type="PDBsum" id="7OJ0"/>
<dbReference type="PDBsum" id="7P3K"/>
<dbReference type="PDBsum" id="7PJS"/>
<dbReference type="PDBsum" id="7PJT"/>
<dbReference type="PDBsum" id="7PJU"/>
<dbReference type="PDBsum" id="7PJV"/>
<dbReference type="PDBsum" id="7PJW"/>
<dbReference type="PDBsum" id="7PJX"/>
<dbReference type="PDBsum" id="7PJY"/>
<dbReference type="PDBsum" id="7PJZ"/>
<dbReference type="PDBsum" id="7Q4K"/>
<dbReference type="PDBsum" id="7QG8"/>
<dbReference type="PDBsum" id="7QGH"/>
<dbReference type="PDBsum" id="7QGN"/>
<dbReference type="PDBsum" id="7QGR"/>
<dbReference type="PDBsum" id="7QQ3"/>
<dbReference type="PDBsum" id="7S1G"/>
<dbReference type="PDBsum" id="7S1H"/>
<dbReference type="PDBsum" id="7S1I"/>
<dbReference type="PDBsum" id="7S1J"/>
<dbReference type="PDBsum" id="7S1K"/>
<dbReference type="PDBsum" id="7SA4"/>
<dbReference type="PDBsum" id="7SS9"/>
<dbReference type="PDBsum" id="7SSD"/>
<dbReference type="PDBsum" id="7SSL"/>
<dbReference type="PDBsum" id="7SSN"/>
<dbReference type="PDBsum" id="7SSO"/>
<dbReference type="PDBsum" id="7SSW"/>
<dbReference type="PDBsum" id="7ST2"/>
<dbReference type="PDBsum" id="7ST6"/>
<dbReference type="PDBsum" id="7ST7"/>
<dbReference type="PDBsum" id="7TOS"/>
<dbReference type="PDBsum" id="7UG7"/>
<dbReference type="PDBsum" id="7UPH"/>
<dbReference type="PDBsum" id="7Y7C"/>
<dbReference type="PDBsum" id="7Y7D"/>
<dbReference type="PDBsum" id="7Y7E"/>
<dbReference type="PDBsum" id="7Y7F"/>
<dbReference type="PDBsum" id="7Y7G"/>
<dbReference type="PDBsum" id="7Y7H"/>
<dbReference type="PDBsum" id="7Z20"/>
<dbReference type="PDBsum" id="7ZOD"/>
<dbReference type="PDBsum" id="7ZP8"/>
<dbReference type="PDBsum" id="7ZQ5"/>
<dbReference type="PDBsum" id="7ZQ6"/>
<dbReference type="PDBsum" id="7ZTA"/>
<dbReference type="PDBsum" id="8A3L"/>
<dbReference type="PDBsum" id="8AKN"/>
<dbReference type="PDBsum" id="8AM9"/>
<dbReference type="PDBsum" id="8ANA"/>
<dbReference type="PDBsum" id="8AP4"/>
<dbReference type="PDBsum" id="8AYE"/>
<dbReference type="PDBsum" id="8B0X"/>
<dbReference type="PDBsum" id="8B7Y"/>
<dbReference type="PDBsum" id="8BF7"/>
<dbReference type="PDBsum" id="8BGE"/>
<dbReference type="PDBsum" id="8BGH"/>
<dbReference type="PDBsum" id="8BH4"/>
<dbReference type="PDBsum" id="8BHJ"/>
<dbReference type="PDBsum" id="8BHL"/>
<dbReference type="PDBsum" id="8BHN"/>
<dbReference type="PDBsum" id="8BHP"/>
<dbReference type="PDBsum" id="8BIL"/>
<dbReference type="PDBsum" id="8BIM"/>
<dbReference type="PDBsum" id="8C8X"/>
<dbReference type="PDBsum" id="8C8Y"/>
<dbReference type="PDBsum" id="8C8Z"/>
<dbReference type="PDBsum" id="8C90"/>
<dbReference type="PDBsum" id="8C91"/>
<dbReference type="PDBsum" id="8C92"/>
<dbReference type="PDBsum" id="8C93"/>
<dbReference type="PDBsum" id="8C94"/>
<dbReference type="PDBsum" id="8C95"/>
<dbReference type="PDBsum" id="8C96"/>
<dbReference type="PDBsum" id="8C97"/>
<dbReference type="PDBsum" id="8C98"/>
<dbReference type="PDBsum" id="8C99"/>
<dbReference type="PDBsum" id="8C9A"/>
<dbReference type="PDBsum" id="8C9B"/>
<dbReference type="PDBsum" id="8C9C"/>
<dbReference type="PDBsum" id="8CAM"/>
<dbReference type="PDBsum" id="8CEU"/>
<dbReference type="PDBsum" id="8CGD"/>
<dbReference type="PDBsum" id="8CGK"/>
<dbReference type="PDBsum" id="8CGV"/>
<dbReference type="PDBsum" id="8EIU"/>
<dbReference type="PDBsum" id="8EKC"/>
<dbReference type="PDBsum" id="8EMM"/>
<dbReference type="PDBsum" id="8FIZ"/>
<dbReference type="PDBsum" id="8FTO"/>
<dbReference type="PDBsum" id="8FZD"/>
<dbReference type="PDBsum" id="8FZE"/>
<dbReference type="PDBsum" id="8FZF"/>
<dbReference type="PDBsum" id="8FZG"/>
<dbReference type="PDBsum" id="8FZH"/>
<dbReference type="PDBsum" id="8FZI"/>
<dbReference type="PDBsum" id="8FZJ"/>
<dbReference type="PDBsum" id="8G2U"/>
<dbReference type="PDBsum" id="8G31"/>
<dbReference type="PDBsum" id="8G34"/>
<dbReference type="PDBsum" id="8G38"/>
<dbReference type="PDBsum" id="8G6W"/>
<dbReference type="PDBsum" id="8G6X"/>
<dbReference type="PDBsum" id="8G6Y"/>
<dbReference type="PDBsum" id="8G7P"/>
<dbReference type="PDBsum" id="8G7Q"/>
<dbReference type="PDBsum" id="8G7R"/>
<dbReference type="PDBsum" id="8G7S"/>
<dbReference type="PDBsum" id="8HSP"/>
<dbReference type="PDBsum" id="8HTZ"/>
<dbReference type="PDBsum" id="8HU1"/>
<dbReference type="PDBsum" id="8IFB"/>
<dbReference type="PDBsum" id="8IFC"/>
<dbReference type="PDBsum" id="8J1Z"/>
<dbReference type="PDBsum" id="8P16"/>
<dbReference type="PDBsum" id="8P17"/>
<dbReference type="PDBsum" id="8P18"/>
<dbReference type="PDBsum" id="8PEG"/>
<dbReference type="PDBsum" id="8PHJ"/>
<dbReference type="PDBsum" id="8PKL"/>
<dbReference type="PDBsum" id="8PVA"/>
<dbReference type="PDBsum" id="8Q4F"/>
<dbReference type="PDBsum" id="8QBT"/>
<dbReference type="PDBsum" id="8QK7"/>
<dbReference type="PDBsum" id="8QOA"/>
<dbReference type="PDBsum" id="8R6C"/>
<dbReference type="PDBsum" id="8R8M"/>
<dbReference type="PDBsum" id="8RPY"/>
<dbReference type="PDBsum" id="8RPZ"/>
<dbReference type="PDBsum" id="8RQ0"/>
<dbReference type="PDBsum" id="8RQ2"/>
<dbReference type="PDBsum" id="8SYL"/>
<dbReference type="PDBsum" id="8T5D"/>
<dbReference type="PDBsum" id="8T5H"/>
<dbReference type="PDBsum" id="8UPO"/>
<dbReference type="PDBsum" id="8UPR"/>
<dbReference type="PDBsum" id="8UQL"/>
<dbReference type="PDBsum" id="8UQM"/>
<dbReference type="PDBsum" id="8UQP"/>
<dbReference type="PDBsum" id="8UR0"/>
<dbReference type="PDBsum" id="8URH"/>
<dbReference type="PDBsum" id="8URI"/>
<dbReference type="PDBsum" id="8URX"/>
<dbReference type="PDBsum" id="8URY"/>
<dbReference type="PDBsum" id="8VS9"/>
<dbReference type="PDBsum" id="8VSA"/>
<dbReference type="PDBsum" id="8W51"/>
<dbReference type="PDBsum" id="8YUO"/>
<dbReference type="PDBsum" id="8YUP"/>
<dbReference type="PDBsum" id="8YUQ"/>
<dbReference type="PDBsum" id="8YUR"/>
<dbReference type="PDBsum" id="8YUS"/>
<dbReference type="PDBsum" id="9CL9"/>
<dbReference type="PDBsum" id="9D89"/>
<dbReference type="PDBsum" id="9FBV"/>
<dbReference type="PDBsum" id="9GFT"/>
<dbReference type="PDBsum" id="9GGR"/>
<dbReference type="PDBsum" id="9H3K"/>
<dbReference type="PDBsum" id="9H3L"/>
<dbReference type="PDBsum" id="9H3M"/>
<dbReference type="PDBsum" id="9H3N"/>
<dbReference type="PDBsum" id="9H3O"/>
<dbReference type="PDBsum" id="9H3P"/>
<dbReference type="PDBsum" id="9H3Q"/>
<dbReference type="PDBsum" id="9H3R"/>
<dbReference type="PDBsum" id="9H3S"/>
<dbReference type="PDBsum" id="9H3T"/>
<dbReference type="PDBsum" id="9H3U"/>
<dbReference type="PDBsum" id="9H3V"/>
<dbReference type="PDBsum" id="9H3W"/>
<dbReference type="PDBsum" id="9H3X"/>
<dbReference type="PDBsum" id="9H3Y"/>
<dbReference type="PDBsum" id="9H3Z"/>
<dbReference type="PDBsum" id="9HA1"/>
<dbReference type="PDBsum" id="9HA2"/>
<dbReference type="PDBsum" id="9HA3"/>
<dbReference type="PDBsum" id="9HA4"/>
<dbReference type="PDBsum" id="9HA5"/>
<dbReference type="PDBsum" id="9HA6"/>
<dbReference type="PDBsum" id="9HA7"/>
<dbReference type="PDBsum" id="9HAI"/>
<dbReference type="PDBsum" id="9HAL"/>
<dbReference type="PDBsum" id="9HAM"/>
<dbReference type="PDBsum" id="9MOR"/>
<dbReference type="PDBsum" id="9MQ4"/>
<dbReference type="EMDB" id="EMD-0076"/>
<dbReference type="EMDB" id="EMD-0080"/>
<dbReference type="EMDB" id="EMD-0081"/>
<dbReference type="EMDB" id="EMD-0082"/>
<dbReference type="EMDB" id="EMD-0083"/>
<dbReference type="EMDB" id="EMD-0137"/>
<dbReference type="EMDB" id="EMD-0139"/>
<dbReference type="EMDB" id="EMD-0261"/>
<dbReference type="EMDB" id="EMD-0322"/>
<dbReference type="EMDB" id="EMD-10073"/>
<dbReference type="EMDB" id="EMD-10353"/>
<dbReference type="EMDB" id="EMD-10453"/>
<dbReference type="EMDB" id="EMD-10458"/>
<dbReference type="EMDB" id="EMD-10655"/>
<dbReference type="EMDB" id="EMD-10656"/>
<dbReference type="EMDB" id="EMD-10657"/>
<dbReference type="EMDB" id="EMD-10705"/>
<dbReference type="EMDB" id="EMD-10905"/>
<dbReference type="EMDB" id="EMD-10906"/>
<dbReference type="EMDB" id="EMD-10907"/>
<dbReference type="EMDB" id="EMD-10908"/>
<dbReference type="EMDB" id="EMD-11418"/>
<dbReference type="EMDB" id="EMD-11419"/>
<dbReference type="EMDB" id="EMD-11420"/>
<dbReference type="EMDB" id="EMD-11421"/>
<dbReference type="EMDB" id="EMD-11422"/>
<dbReference type="EMDB" id="EMD-11423"/>
<dbReference type="EMDB" id="EMD-11426"/>
<dbReference type="EMDB" id="EMD-11710"/>
<dbReference type="EMDB" id="EMD-11713"/>
<dbReference type="EMDB" id="EMD-11717"/>
<dbReference type="EMDB" id="EMD-11718"/>
<dbReference type="EMDB" id="EMD-12035"/>
<dbReference type="EMDB" id="EMD-12215"/>
<dbReference type="EMDB" id="EMD-12216"/>
<dbReference type="EMDB" id="EMD-12217"/>
<dbReference type="EMDB" id="EMD-12218"/>
<dbReference type="EMDB" id="EMD-12219"/>
<dbReference type="EMDB" id="EMD-12261"/>
<dbReference type="EMDB" id="EMD-12635"/>
<dbReference type="EMDB" id="EMD-12693"/>
<dbReference type="EMDB" id="EMD-12694"/>
<dbReference type="EMDB" id="EMD-12695"/>
<dbReference type="EMDB" id="EMD-12826"/>
<dbReference type="EMDB" id="EMD-12936"/>
<dbReference type="EMDB" id="EMD-12937"/>
<dbReference type="EMDB" id="EMD-13180"/>
<dbReference type="EMDB" id="EMD-13458"/>
<dbReference type="EMDB" id="EMD-13459"/>
<dbReference type="EMDB" id="EMD-13461"/>
<dbReference type="EMDB" id="EMD-13462"/>
<dbReference type="EMDB" id="EMD-13463"/>
<dbReference type="EMDB" id="EMD-13464"/>
<dbReference type="EMDB" id="EMD-13465"/>
<dbReference type="EMDB" id="EMD-13805"/>
<dbReference type="EMDB" id="EMD-13952"/>
<dbReference type="EMDB" id="EMD-13955"/>
<dbReference type="EMDB" id="EMD-13956"/>
<dbReference type="EMDB" id="EMD-13958"/>
<dbReference type="EMDB" id="EMD-14121"/>
<dbReference type="EMDB" id="EMD-14454"/>
<dbReference type="EMDB" id="EMD-14846"/>
<dbReference type="EMDB" id="EMD-14850"/>
<dbReference type="EMDB" id="EMD-14864"/>
<dbReference type="EMDB" id="EMD-14865"/>
<dbReference type="EMDB" id="EMD-14956"/>
<dbReference type="EMDB" id="EMD-15116"/>
<dbReference type="EMDB" id="EMD-15558"/>
<dbReference type="EMDB" id="EMD-15712"/>
<dbReference type="EMDB" id="EMD-15793"/>
<dbReference type="EMDB" id="EMD-15905"/>
<dbReference type="EMDB" id="EMD-16015"/>
<dbReference type="EMDB" id="EMD-16029"/>
<dbReference type="EMDB" id="EMD-16031"/>
<dbReference type="EMDB" id="EMD-16047"/>
<dbReference type="EMDB" id="EMD-16057"/>
<dbReference type="EMDB" id="EMD-16059"/>
<dbReference type="EMDB" id="EMD-16062"/>
<dbReference type="EMDB" id="EMD-16065"/>
<dbReference type="EMDB" id="EMD-16081"/>
<dbReference type="EMDB" id="EMD-16082"/>
<dbReference type="EMDB" id="EMD-16494"/>
<dbReference type="EMDB" id="EMD-16495"/>
<dbReference type="EMDB" id="EMD-16496"/>
<dbReference type="EMDB" id="EMD-16497"/>
<dbReference type="EMDB" id="EMD-16498"/>
<dbReference type="EMDB" id="EMD-16499"/>
<dbReference type="EMDB" id="EMD-16500"/>
<dbReference type="EMDB" id="EMD-16501"/>
<dbReference type="EMDB" id="EMD-16502"/>
<dbReference type="EMDB" id="EMD-16503"/>
<dbReference type="EMDB" id="EMD-16504"/>
<dbReference type="EMDB" id="EMD-16505"/>
<dbReference type="EMDB" id="EMD-16506"/>
<dbReference type="EMDB" id="EMD-16507"/>
<dbReference type="EMDB" id="EMD-16508"/>
<dbReference type="EMDB" id="EMD-16509"/>
<dbReference type="EMDB" id="EMD-16530"/>
<dbReference type="EMDB" id="EMD-16613"/>
<dbReference type="EMDB" id="EMD-16641"/>
<dbReference type="EMDB" id="EMD-16646"/>
<dbReference type="EMDB" id="EMD-16652"/>
<dbReference type="EMDB" id="EMD-17346"/>
<dbReference type="EMDB" id="EMD-17347"/>
<dbReference type="EMDB" id="EMD-17348"/>
<dbReference type="EMDB" id="EMD-17631"/>
<dbReference type="EMDB" id="EMD-17667"/>
<dbReference type="EMDB" id="EMD-17743"/>
<dbReference type="EMDB" id="EMD-17959"/>
<dbReference type="EMDB" id="EMD-18145"/>
<dbReference type="EMDB" id="EMD-18320"/>
<dbReference type="EMDB" id="EMD-18458"/>
<dbReference type="EMDB" id="EMD-18534"/>
<dbReference type="EMDB" id="EMD-18950"/>
<dbReference type="EMDB" id="EMD-19004"/>
<dbReference type="EMDB" id="EMD-19426"/>
<dbReference type="EMDB" id="EMD-19427"/>
<dbReference type="EMDB" id="EMD-19428"/>
<dbReference type="EMDB" id="EMD-19429"/>
<dbReference type="EMDB" id="EMD-20048"/>
<dbReference type="EMDB" id="EMD-20052"/>
<dbReference type="EMDB" id="EMD-21620"/>
<dbReference type="EMDB" id="EMD-21625"/>
<dbReference type="EMDB" id="EMD-21630"/>
<dbReference type="EMDB" id="EMD-21631"/>
<dbReference type="EMDB" id="EMD-21632"/>
<dbReference type="EMDB" id="EMD-21633"/>
<dbReference type="EMDB" id="EMD-21634"/>
<dbReference type="EMDB" id="EMD-21635"/>
<dbReference type="EMDB" id="EMD-21636"/>
<dbReference type="EMDB" id="EMD-21637"/>
<dbReference type="EMDB" id="EMD-21638"/>
<dbReference type="EMDB" id="EMD-21639"/>
<dbReference type="EMDB" id="EMD-21640"/>
<dbReference type="EMDB" id="EMD-21641"/>
<dbReference type="EMDB" id="EMD-21856"/>
<dbReference type="EMDB" id="EMD-21857"/>
<dbReference type="EMDB" id="EMD-21858"/>
<dbReference type="EMDB" id="EMD-22459"/>
<dbReference type="EMDB" id="EMD-22461"/>
<dbReference type="EMDB" id="EMD-22464"/>
<dbReference type="EMDB" id="EMD-22466"/>
<dbReference type="EMDB" id="EMD-22469"/>
<dbReference type="EMDB" id="EMD-22472"/>
<dbReference type="EMDB" id="EMD-22669"/>
<dbReference type="EMDB" id="EMD-22670"/>
<dbReference type="EMDB" id="EMD-22671"/>
<dbReference type="EMDB" id="EMD-22672"/>
<dbReference type="EMDB" id="EMD-22673"/>
<dbReference type="EMDB" id="EMD-22674"/>
<dbReference type="EMDB" id="EMD-23528"/>
<dbReference type="EMDB" id="EMD-24120"/>
<dbReference type="EMDB" id="EMD-24132"/>
<dbReference type="EMDB" id="EMD-24133"/>
<dbReference type="EMDB" id="EMD-24134"/>
<dbReference type="EMDB" id="EMD-24135"/>
<dbReference type="EMDB" id="EMD-24136"/>
<dbReference type="EMDB" id="EMD-24803"/>
<dbReference type="EMDB" id="EMD-25405"/>
<dbReference type="EMDB" id="EMD-25407"/>
<dbReference type="EMDB" id="EMD-25409"/>
<dbReference type="EMDB" id="EMD-25410"/>
<dbReference type="EMDB" id="EMD-25411"/>
<dbReference type="EMDB" id="EMD-25415"/>
<dbReference type="EMDB" id="EMD-25418"/>
<dbReference type="EMDB" id="EMD-25420"/>
<dbReference type="EMDB" id="EMD-25421"/>
<dbReference type="EMDB" id="EMD-30215"/>
<dbReference type="EMDB" id="EMD-30598"/>
<dbReference type="EMDB" id="EMD-30611"/>
<dbReference type="EMDB" id="EMD-33660"/>
<dbReference type="EMDB" id="EMD-33661"/>
<dbReference type="EMDB" id="EMD-33662"/>
<dbReference type="EMDB" id="EMD-33663"/>
<dbReference type="EMDB" id="EMD-33664"/>
<dbReference type="EMDB" id="EMD-33665"/>
<dbReference type="EMDB" id="EMD-3489"/>
<dbReference type="EMDB" id="EMD-3490"/>
<dbReference type="EMDB" id="EMD-3492"/>
<dbReference type="EMDB" id="EMD-3493"/>
<dbReference type="EMDB" id="EMD-35001"/>
<dbReference type="EMDB" id="EMD-35020"/>
<dbReference type="EMDB" id="EMD-35022"/>
<dbReference type="EMDB" id="EMD-3508"/>
<dbReference type="EMDB" id="EMD-35411"/>
<dbReference type="EMDB" id="EMD-35412"/>
<dbReference type="EMDB" id="EMD-35939"/>
<dbReference type="EMDB" id="EMD-3617"/>
<dbReference type="EMDB" id="EMD-3713"/>
<dbReference type="EMDB" id="EMD-37271"/>
<dbReference type="EMDB" id="EMD-3730"/>
<dbReference type="EMDB" id="EMD-3898"/>
<dbReference type="EMDB" id="EMD-3899"/>
<dbReference type="EMDB" id="EMD-3903"/>
<dbReference type="EMDB" id="EMD-39577"/>
<dbReference type="EMDB" id="EMD-39578"/>
<dbReference type="EMDB" id="EMD-39579"/>
<dbReference type="EMDB" id="EMD-39580"/>
<dbReference type="EMDB" id="EMD-39581"/>
<dbReference type="EMDB" id="EMD-4001"/>
<dbReference type="EMDB" id="EMD-4121"/>
<dbReference type="EMDB" id="EMD-4122"/>
<dbReference type="EMDB" id="EMD-4123"/>
<dbReference type="EMDB" id="EMD-4124"/>
<dbReference type="EMDB" id="EMD-4125"/>
<dbReference type="EMDB" id="EMD-4126"/>
<dbReference type="EMDB" id="EMD-4378"/>
<dbReference type="EMDB" id="EMD-4379"/>
<dbReference type="EMDB" id="EMD-4380"/>
<dbReference type="EMDB" id="EMD-4381"/>
<dbReference type="EMDB" id="EMD-4382"/>
<dbReference type="EMDB" id="EMD-4383"/>
<dbReference type="EMDB" id="EMD-4476"/>
<dbReference type="EMDB" id="EMD-4477"/>
<dbReference type="EMDB" id="EMD-4478"/>
<dbReference type="EMDB" id="EMD-45666"/>
<dbReference type="EMDB" id="EMD-4638"/>
<dbReference type="EMDB" id="EMD-50296"/>
<dbReference type="EMDB" id="EMD-51318"/>
<dbReference type="EMDB" id="EMD-51340"/>
<dbReference type="EMDB" id="EMD-51828"/>
<dbReference type="EMDB" id="EMD-51829"/>
<dbReference type="EMDB" id="EMD-51830"/>
<dbReference type="EMDB" id="EMD-51831"/>
<dbReference type="EMDB" id="EMD-51832"/>
<dbReference type="EMDB" id="EMD-51833"/>
<dbReference type="EMDB" id="EMD-51834"/>
<dbReference type="EMDB" id="EMD-51835"/>
<dbReference type="EMDB" id="EMD-51836"/>
<dbReference type="EMDB" id="EMD-51837"/>
<dbReference type="EMDB" id="EMD-51838"/>
<dbReference type="EMDB" id="EMD-51839"/>
<dbReference type="EMDB" id="EMD-51840"/>
<dbReference type="EMDB" id="EMD-51841"/>
<dbReference type="EMDB" id="EMD-51842"/>
<dbReference type="EMDB" id="EMD-51843"/>
<dbReference type="EMDB" id="EMD-51973"/>
<dbReference type="EMDB" id="EMD-51974"/>
<dbReference type="EMDB" id="EMD-51975"/>
<dbReference type="EMDB" id="EMD-51976"/>
<dbReference type="EMDB" id="EMD-51977"/>
<dbReference type="EMDB" id="EMD-51978"/>
<dbReference type="EMDB" id="EMD-51979"/>
<dbReference type="EMDB" id="EMD-51981"/>
<dbReference type="EMDB" id="EMD-51982"/>
<dbReference type="EMDB" id="EMD-51983"/>
<dbReference type="EMDB" id="EMD-6667"/>
<dbReference type="EMDB" id="EMD-7289"/>
<dbReference type="EMDB" id="EMD-7341"/>
<dbReference type="EMDB" id="EMD-7970"/>
<dbReference type="EMDB" id="EMD-8000"/>
<dbReference type="EMDB" id="EMD-8001"/>
<dbReference type="EMDB" id="EMD-8002"/>
<dbReference type="EMDB" id="EMD-8003"/>
<dbReference type="EMDB" id="EMD-8004"/>
<dbReference type="EMDB" id="EMD-8107"/>
<dbReference type="EMDB" id="EMD-8175"/>
<dbReference type="EMDB" id="EMD-8176"/>
<dbReference type="EMDB" id="EMD-8237"/>
<dbReference type="EMDB" id="EMD-8238"/>
<dbReference type="EMDB" id="EMD-8279"/>
<dbReference type="EMDB" id="EMD-8280"/>
<dbReference type="EMDB" id="EMD-8281"/>
<dbReference type="EMDB" id="EMD-8282"/>
<dbReference type="EMDB" id="EMD-8505"/>
<dbReference type="EMDB" id="EMD-8615"/>
<dbReference type="EMDB" id="EMD-8616"/>
<dbReference type="EMDB" id="EMD-8617"/>
<dbReference type="EMDB" id="EMD-8618"/>
<dbReference type="EMDB" id="EMD-8619"/>
<dbReference type="EMDB" id="EMD-8620"/>
<dbReference type="EMDB" id="EMD-8813"/>
<dbReference type="EMDB" id="EMD-8814"/>
<dbReference type="EMDB" id="EMD-8815"/>
<dbReference type="EMDB" id="EMD-8828"/>
<dbReference type="SMR" id="P60624"/>
<dbReference type="BioGRID" id="4263403">
    <property type="interactions" value="2"/>
</dbReference>
<dbReference type="BioGRID" id="852122">
    <property type="interactions" value="1"/>
</dbReference>
<dbReference type="ComplexPortal" id="CPX-3807">
    <property type="entry name" value="50S large ribosomal subunit"/>
</dbReference>
<dbReference type="DIP" id="DIP-47846N"/>
<dbReference type="FunCoup" id="P60624">
    <property type="interactions" value="965"/>
</dbReference>
<dbReference type="IntAct" id="P60624">
    <property type="interactions" value="74"/>
</dbReference>
<dbReference type="STRING" id="511145.b3309"/>
<dbReference type="jPOST" id="P60624"/>
<dbReference type="PaxDb" id="511145-b3309"/>
<dbReference type="EnsemblBacteria" id="AAC76334">
    <property type="protein sequence ID" value="AAC76334"/>
    <property type="gene ID" value="b3309"/>
</dbReference>
<dbReference type="GeneID" id="93778678"/>
<dbReference type="GeneID" id="947810"/>
<dbReference type="KEGG" id="ecj:JW3271"/>
<dbReference type="KEGG" id="eco:b3309"/>
<dbReference type="KEGG" id="ecoc:C3026_17985"/>
<dbReference type="PATRIC" id="fig|1411691.4.peg.3422"/>
<dbReference type="EchoBASE" id="EB0877"/>
<dbReference type="eggNOG" id="COG0198">
    <property type="taxonomic scope" value="Bacteria"/>
</dbReference>
<dbReference type="HOGENOM" id="CLU_093315_2_2_6"/>
<dbReference type="InParanoid" id="P60624"/>
<dbReference type="OMA" id="HISNLML"/>
<dbReference type="OrthoDB" id="9807419at2"/>
<dbReference type="PhylomeDB" id="P60624"/>
<dbReference type="BioCyc" id="EcoCyc:EG10884-MONOMER"/>
<dbReference type="BioCyc" id="MetaCyc:EG10884-MONOMER"/>
<dbReference type="EvolutionaryTrace" id="P60624"/>
<dbReference type="PRO" id="PR:P60624"/>
<dbReference type="Proteomes" id="UP000000625">
    <property type="component" value="Chromosome"/>
</dbReference>
<dbReference type="GO" id="GO:0005737">
    <property type="term" value="C:cytoplasm"/>
    <property type="evidence" value="ECO:0000314"/>
    <property type="project" value="ComplexPortal"/>
</dbReference>
<dbReference type="GO" id="GO:0005829">
    <property type="term" value="C:cytosol"/>
    <property type="evidence" value="ECO:0000314"/>
    <property type="project" value="EcoCyc"/>
</dbReference>
<dbReference type="GO" id="GO:0022625">
    <property type="term" value="C:cytosolic large ribosomal subunit"/>
    <property type="evidence" value="ECO:0000314"/>
    <property type="project" value="CAFA"/>
</dbReference>
<dbReference type="GO" id="GO:0070180">
    <property type="term" value="F:large ribosomal subunit rRNA binding"/>
    <property type="evidence" value="ECO:0000314"/>
    <property type="project" value="EcoCyc"/>
</dbReference>
<dbReference type="GO" id="GO:0003735">
    <property type="term" value="F:structural constituent of ribosome"/>
    <property type="evidence" value="ECO:0000314"/>
    <property type="project" value="CAFA"/>
</dbReference>
<dbReference type="GO" id="GO:0002181">
    <property type="term" value="P:cytoplasmic translation"/>
    <property type="evidence" value="ECO:0000303"/>
    <property type="project" value="ComplexPortal"/>
</dbReference>
<dbReference type="GO" id="GO:0000027">
    <property type="term" value="P:ribosomal large subunit assembly"/>
    <property type="evidence" value="ECO:0000314"/>
    <property type="project" value="CAFA"/>
</dbReference>
<dbReference type="GO" id="GO:0006412">
    <property type="term" value="P:translation"/>
    <property type="evidence" value="ECO:0000318"/>
    <property type="project" value="GO_Central"/>
</dbReference>
<dbReference type="CDD" id="cd06089">
    <property type="entry name" value="KOW_RPL26"/>
    <property type="match status" value="1"/>
</dbReference>
<dbReference type="FunFam" id="2.30.30.30:FF:000004">
    <property type="entry name" value="50S ribosomal protein L24"/>
    <property type="match status" value="1"/>
</dbReference>
<dbReference type="Gene3D" id="2.30.30.30">
    <property type="match status" value="1"/>
</dbReference>
<dbReference type="HAMAP" id="MF_01326_B">
    <property type="entry name" value="Ribosomal_uL24_B"/>
    <property type="match status" value="1"/>
</dbReference>
<dbReference type="InterPro" id="IPR005824">
    <property type="entry name" value="KOW"/>
</dbReference>
<dbReference type="InterPro" id="IPR014722">
    <property type="entry name" value="Rib_uL2_dom2"/>
</dbReference>
<dbReference type="InterPro" id="IPR003256">
    <property type="entry name" value="Ribosomal_uL24"/>
</dbReference>
<dbReference type="InterPro" id="IPR005825">
    <property type="entry name" value="Ribosomal_uL24_CS"/>
</dbReference>
<dbReference type="InterPro" id="IPR041988">
    <property type="entry name" value="Ribosomal_uL24_KOW"/>
</dbReference>
<dbReference type="InterPro" id="IPR008991">
    <property type="entry name" value="Translation_prot_SH3-like_sf"/>
</dbReference>
<dbReference type="NCBIfam" id="TIGR01079">
    <property type="entry name" value="rplX_bact"/>
    <property type="match status" value="1"/>
</dbReference>
<dbReference type="PANTHER" id="PTHR12903">
    <property type="entry name" value="MITOCHONDRIAL RIBOSOMAL PROTEIN L24"/>
    <property type="match status" value="1"/>
</dbReference>
<dbReference type="Pfam" id="PF00467">
    <property type="entry name" value="KOW"/>
    <property type="match status" value="1"/>
</dbReference>
<dbReference type="Pfam" id="PF17136">
    <property type="entry name" value="ribosomal_L24"/>
    <property type="match status" value="1"/>
</dbReference>
<dbReference type="SMART" id="SM00739">
    <property type="entry name" value="KOW"/>
    <property type="match status" value="1"/>
</dbReference>
<dbReference type="SUPFAM" id="SSF50104">
    <property type="entry name" value="Translation proteins SH3-like domain"/>
    <property type="match status" value="1"/>
</dbReference>
<dbReference type="PROSITE" id="PS01108">
    <property type="entry name" value="RIBOSOMAL_L24"/>
    <property type="match status" value="1"/>
</dbReference>
<reference key="1">
    <citation type="journal article" date="1983" name="Nucleic Acids Res.">
        <title>The spc ribosomal protein operon of Escherichia coli: sequence and cotranscription of the ribosomal protein genes and a protein export gene.</title>
        <authorList>
            <person name="Cerretti D.P."/>
            <person name="Dean D."/>
            <person name="Davis G.R."/>
            <person name="Bedwell D.M."/>
            <person name="Nomura M."/>
        </authorList>
    </citation>
    <scope>NUCLEOTIDE SEQUENCE [GENOMIC DNA]</scope>
    <source>
        <strain>K12</strain>
    </source>
</reference>
<reference key="2">
    <citation type="journal article" date="1997" name="Science">
        <title>The complete genome sequence of Escherichia coli K-12.</title>
        <authorList>
            <person name="Blattner F.R."/>
            <person name="Plunkett G. III"/>
            <person name="Bloch C.A."/>
            <person name="Perna N.T."/>
            <person name="Burland V."/>
            <person name="Riley M."/>
            <person name="Collado-Vides J."/>
            <person name="Glasner J.D."/>
            <person name="Rode C.K."/>
            <person name="Mayhew G.F."/>
            <person name="Gregor J."/>
            <person name="Davis N.W."/>
            <person name="Kirkpatrick H.A."/>
            <person name="Goeden M.A."/>
            <person name="Rose D.J."/>
            <person name="Mau B."/>
            <person name="Shao Y."/>
        </authorList>
    </citation>
    <scope>NUCLEOTIDE SEQUENCE [LARGE SCALE GENOMIC DNA]</scope>
    <source>
        <strain>K12 / MG1655 / ATCC 47076</strain>
    </source>
</reference>
<reference key="3">
    <citation type="journal article" date="2006" name="Mol. Syst. Biol.">
        <title>Highly accurate genome sequences of Escherichia coli K-12 strains MG1655 and W3110.</title>
        <authorList>
            <person name="Hayashi K."/>
            <person name="Morooka N."/>
            <person name="Yamamoto Y."/>
            <person name="Fujita K."/>
            <person name="Isono K."/>
            <person name="Choi S."/>
            <person name="Ohtsubo E."/>
            <person name="Baba T."/>
            <person name="Wanner B.L."/>
            <person name="Mori H."/>
            <person name="Horiuchi T."/>
        </authorList>
    </citation>
    <scope>NUCLEOTIDE SEQUENCE [LARGE SCALE GENOMIC DNA]</scope>
    <source>
        <strain>K12 / W3110 / ATCC 27325 / DSM 5911</strain>
    </source>
</reference>
<reference key="4">
    <citation type="journal article" date="1979" name="FEBS Lett.">
        <title>Primary structure of protein L24 from the Escherichia coli ribosome.</title>
        <authorList>
            <person name="Wittmann-Liebold B."/>
        </authorList>
    </citation>
    <scope>PROTEIN SEQUENCE OF 2-104</scope>
    <scope>SUBUNIT</scope>
    <source>
        <strain>K12</strain>
    </source>
</reference>
<reference key="5">
    <citation type="journal article" date="1981" name="Nucleic Acids Res.">
        <title>Translational regulation by ribosomal protein S8 in Escherichia coli: structural homology between rRNA binding site and feedback target on mRNA.</title>
        <authorList>
            <person name="Olins P.O."/>
            <person name="Nomura M."/>
        </authorList>
    </citation>
    <scope>NUCLEOTIDE SEQUENCE [GENOMIC DNA] OF 86-104</scope>
    <source>
        <strain>K12 / JM105 / ATCC 47016</strain>
    </source>
</reference>
<reference key="6">
    <citation type="journal article" date="1978" name="J. Biol. Chem.">
        <title>The ribosomal protein L24 of Escherichia coli is an assembly protein.</title>
        <authorList>
            <person name="Spillmann S."/>
            <person name="Nierhaus K.H."/>
        </authorList>
    </citation>
    <scope>FUNCTION IN SUBUNIT ASSEMBLY</scope>
    <source>
        <strain>K12 / A19</strain>
    </source>
</reference>
<reference key="7">
    <citation type="journal article" date="1982" name="Proc. Natl. Acad. Sci. U.S.A.">
        <title>Initiator proteins for the assembly of the 50S subunit from Escherichia coli ribosomes.</title>
        <authorList>
            <person name="Nowotny V."/>
            <person name="Nierhaus K.H."/>
        </authorList>
    </citation>
    <scope>IDENTIFICATION AS AN ASSEMBLY INITIATOR PROTEIN</scope>
</reference>
<reference key="8">
    <citation type="journal article" date="1987" name="J. Biol. Chem.">
        <title>Incorporation of six additional proteins to complete the assembly map of the 50 S subunit from Escherichia coli ribosomes.</title>
        <authorList>
            <person name="Herold M."/>
            <person name="Nierhaus K.H."/>
        </authorList>
    </citation>
    <scope>ASSEMBLY MAP OF THE 50S SUBUNIT</scope>
    <source>
        <strain>K12</strain>
    </source>
</reference>
<reference key="9">
    <citation type="journal article" date="1999" name="Anal. Biochem.">
        <title>Observation of Escherichia coli ribosomal proteins and their posttranslational modifications by mass spectrometry.</title>
        <authorList>
            <person name="Arnold R.J."/>
            <person name="Reilly J.P."/>
        </authorList>
    </citation>
    <scope>MASS SPECTROMETRY</scope>
    <scope>SUBUNIT</scope>
    <source>
        <strain>K12 / ATCC 25404 / DSM 5698 / NCIMB 11290</strain>
    </source>
</reference>
<reference key="10">
    <citation type="journal article" date="2005" name="Nature">
        <title>Structure of the E. coli protein-conducting channel bound to a translating ribosome.</title>
        <authorList>
            <person name="Mitra K."/>
            <person name="Schaffitzel C."/>
            <person name="Shaikh T."/>
            <person name="Tama F."/>
            <person name="Jenni S."/>
            <person name="Brooks C.L. III"/>
            <person name="Ban N."/>
            <person name="Frank J."/>
        </authorList>
    </citation>
    <scope>POSSIBLE CONTACT WITH THE SECYEG TRANSLOCATION COMPLEX</scope>
    <source>
        <strain>MRE-600</strain>
    </source>
</reference>
<reference key="11">
    <citation type="journal article" date="2014" name="Curr. Opin. Struct. Biol.">
        <title>A new system for naming ribosomal proteins.</title>
        <authorList>
            <person name="Ban N."/>
            <person name="Beckmann R."/>
            <person name="Cate J.H.D."/>
            <person name="Dinman J.D."/>
            <person name="Dragon F."/>
            <person name="Ellis S.R."/>
            <person name="Lafontaine D.L.J."/>
            <person name="Lindahl L."/>
            <person name="Liljas A."/>
            <person name="Lipton J.M."/>
            <person name="McAlear M.A."/>
            <person name="Moore P.B."/>
            <person name="Noller H.F."/>
            <person name="Ortega J."/>
            <person name="Panse V.G."/>
            <person name="Ramakrishnan V."/>
            <person name="Spahn C.M.T."/>
            <person name="Steitz T.A."/>
            <person name="Tchorzewski M."/>
            <person name="Tollervey D."/>
            <person name="Warren A.J."/>
            <person name="Williamson J.R."/>
            <person name="Wilson D."/>
            <person name="Yonath A."/>
            <person name="Yusupov M."/>
        </authorList>
    </citation>
    <scope>NOMENCLATURE</scope>
</reference>
<reference key="12">
    <citation type="journal article" date="2003" name="Cell">
        <title>Study of the structural dynamics of the E. coli 70S ribosome using real-space refinement.</title>
        <authorList>
            <person name="Gao H."/>
            <person name="Sengupta J."/>
            <person name="Valle M."/>
            <person name="Korostelev A."/>
            <person name="Eswar N."/>
            <person name="Stagg S.M."/>
            <person name="Van Roey P."/>
            <person name="Agrawal R.K."/>
            <person name="Harvey S.C."/>
            <person name="Sali A."/>
            <person name="Chapman M.S."/>
            <person name="Frank J."/>
        </authorList>
    </citation>
    <scope>STRUCTURE BY ELECTRON MICROSCOPY (11.50 ANGSTROMS)</scope>
    <scope>SUBUNIT</scope>
    <source>
        <strain>MRE-600</strain>
    </source>
</reference>
<reference key="13">
    <citation type="journal article" date="2005" name="Science">
        <title>Structures of the bacterial ribosome at 3.5 A resolution.</title>
        <authorList>
            <person name="Schuwirth B.S."/>
            <person name="Borovinskaya M.A."/>
            <person name="Hau C.W."/>
            <person name="Zhang W."/>
            <person name="Vila-Sanjurjo A."/>
            <person name="Holton J.M."/>
            <person name="Cate J.H.D."/>
        </authorList>
    </citation>
    <scope>X-RAY CRYSTALLOGRAPHY (3.46 ANGSTROMS) OF 2 DIFFERENT RIBOSOME STRUCTURES</scope>
    <scope>SUBUNIT</scope>
    <source>
        <strain>MRE-600</strain>
    </source>
</reference>
<reference key="14">
    <citation type="journal article" date="2014" name="Cell Rep.">
        <title>Molecular basis for the ribosome functioning as an L-tryptophan sensor.</title>
        <authorList>
            <person name="Bischoff L."/>
            <person name="Berninghausen O."/>
            <person name="Beckmann R."/>
        </authorList>
    </citation>
    <scope>STRUCTURE BY ELECTRON MICROSCOPY (3.80 ANGSTROMS) OF 2-103 IN TNAC-STALLED 50S RIBOSOMAL SUBUNIT</scope>
    <scope>SUBUNIT</scope>
    <source>
        <strain>K12 / A19 / KC6</strain>
    </source>
</reference>
<reference key="15">
    <citation type="journal article" date="2014" name="PLoS Biol.">
        <title>Structural and functional insights into the mode of action of a universally conserved Obg GTPase.</title>
        <authorList>
            <person name="Feng B."/>
            <person name="Mandava C.S."/>
            <person name="Guo Q."/>
            <person name="Wang J."/>
            <person name="Cao W."/>
            <person name="Li N."/>
            <person name="Zhang Y."/>
            <person name="Zhang Y."/>
            <person name="Wang Z."/>
            <person name="Wu J."/>
            <person name="Sanyal S."/>
            <person name="Lei J."/>
            <person name="Gao N."/>
        </authorList>
    </citation>
    <scope>STRUCTURE BY ELECTRON MICROSCOPY (5.5 ANGSTROMS) OF 2-104 OF 50S RIBOSOMAL SUBUNIT IN COMPLEX WITH OBGE AND GMP-PNP</scope>
    <scope>SUBUNIT</scope>
</reference>
<reference key="16">
    <citation type="journal article" date="2017" name="Nature">
        <title>Mechanistic insights into the alternative translation termination by ArfA and RF2.</title>
        <authorList>
            <person name="Ma C."/>
            <person name="Kurita D."/>
            <person name="Li N."/>
            <person name="Chen Y."/>
            <person name="Himeno H."/>
            <person name="Gao N."/>
        </authorList>
    </citation>
    <scope>STRUCTURE BY ELECTRON MICROSCOPY (3.0 ANGSTROMS) OF 70S RIBOSOME IN COMPLEX WITH ARFA AND RF2</scope>
    <scope>SUBUNIT</scope>
</reference>
<reference key="17">
    <citation type="journal article" date="2017" name="Nature">
        <title>Structural basis for ArfA-RF2-mediated translation termination on mRNAs lacking stop codons.</title>
        <authorList>
            <person name="Huter P."/>
            <person name="Mueller C."/>
            <person name="Beckert B."/>
            <person name="Arenz S."/>
            <person name="Berninghausen O."/>
            <person name="Beckmann R."/>
            <person name="Wilson D.N."/>
        </authorList>
    </citation>
    <scope>STRUCTURE BY ELECTRON MICROSCOPY (3.1 ANGSTROMS) OF 70S RIBOSOME IN COMPLEX WITH ARFA AND RF2</scope>
    <scope>SUBUNIT</scope>
</reference>
<reference key="18">
    <citation type="journal article" date="2016" name="Science">
        <title>Translational termination without a stop codon.</title>
        <authorList>
            <person name="James N.R."/>
            <person name="Brown A."/>
            <person name="Gordiyenko Y."/>
            <person name="Ramakrishnan V."/>
        </authorList>
    </citation>
    <scope>STRUCTURE BY ELECTRON MICROSCOPY (2.97 ANGSTROMS) OF 70S RIBOSOME IN COMPLEX WITH ARFA AND RF2</scope>
    <scope>SUBUNIT</scope>
</reference>
<reference key="19">
    <citation type="journal article" date="2017" name="Nature">
        <title>Structural basis of co-translational quality control by ArfA and RF2 bound to ribosome.</title>
        <authorList>
            <person name="Zeng F."/>
            <person name="Chen Y."/>
            <person name="Remis J."/>
            <person name="Shekhar M."/>
            <person name="Phillips J.C."/>
            <person name="Tajkhorshid E."/>
            <person name="Jin H."/>
        </authorList>
    </citation>
    <scope>STRUCTURE BY ELECTRON MICROSCOPY (3.52 ANGSTROMS) OF 70S RIBOSOME IN COMPLEX WITH ARFA AND RF2</scope>
    <scope>SUBUNIT</scope>
</reference>
<organism>
    <name type="scientific">Escherichia coli (strain K12)</name>
    <dbReference type="NCBI Taxonomy" id="83333"/>
    <lineage>
        <taxon>Bacteria</taxon>
        <taxon>Pseudomonadati</taxon>
        <taxon>Pseudomonadota</taxon>
        <taxon>Gammaproteobacteria</taxon>
        <taxon>Enterobacterales</taxon>
        <taxon>Enterobacteriaceae</taxon>
        <taxon>Escherichia</taxon>
    </lineage>
</organism>
<proteinExistence type="evidence at protein level"/>
<gene>
    <name type="primary">rplX</name>
    <name type="ordered locus">b3309</name>
    <name type="ordered locus">JW3271</name>
</gene>
<comment type="function">
    <text evidence="10 11 14">One of two assembly initiator proteins, it binds directly to the 5'-end of the 23S rRNA, where it nucleates assembly of the 50S subunit. It is not thought to be involved in the functions of the mature 50S subunit in vitro.</text>
</comment>
<comment type="function">
    <text evidence="4 11">One of the proteins that surrounds the polypeptide exit tunnel on the outside of the subunit.</text>
</comment>
<comment type="subunit">
    <text evidence="1 2 3 5 6 7 8 9 13 17">Part of the 50S ribosomal subunit (PubMed:10094780, PubMed:12809609, PubMed:16272117, PubMed:24844575, PubMed:25310980, PubMed:27906160, PubMed:27906161, PubMed:27934701, PubMed:391595). Might contact the SecYEG translocation complex when it is docked with the ribosome.</text>
</comment>
<comment type="mass spectrometry" mass="11186.5" method="MALDI" evidence="1"/>
<comment type="similarity">
    <text evidence="16">Belongs to the universal ribosomal protein uL24 family.</text>
</comment>
<feature type="initiator methionine" description="Removed" evidence="12">
    <location>
        <position position="1"/>
    </location>
</feature>
<feature type="chain" id="PRO_0000130654" description="Large ribosomal subunit protein uL24">
    <location>
        <begin position="2"/>
        <end position="104"/>
    </location>
</feature>
<feature type="strand" evidence="19">
    <location>
        <begin position="10"/>
        <end position="13"/>
    </location>
</feature>
<feature type="turn" evidence="19">
    <location>
        <begin position="17"/>
        <end position="20"/>
    </location>
</feature>
<feature type="strand" evidence="19">
    <location>
        <begin position="22"/>
        <end position="28"/>
    </location>
</feature>
<feature type="strand" evidence="19">
    <location>
        <begin position="32"/>
        <end position="36"/>
    </location>
</feature>
<feature type="strand" evidence="19">
    <location>
        <begin position="39"/>
        <end position="45"/>
    </location>
</feature>
<feature type="strand" evidence="20">
    <location>
        <begin position="50"/>
        <end position="53"/>
    </location>
</feature>
<feature type="strand" evidence="19">
    <location>
        <begin position="58"/>
        <end position="62"/>
    </location>
</feature>
<feature type="strand" evidence="18">
    <location>
        <begin position="64"/>
        <end position="66"/>
    </location>
</feature>
<feature type="helix" evidence="19">
    <location>
        <begin position="67"/>
        <end position="69"/>
    </location>
</feature>
<feature type="strand" evidence="19">
    <location>
        <begin position="70"/>
        <end position="74"/>
    </location>
</feature>
<feature type="turn" evidence="19">
    <location>
        <begin position="75"/>
        <end position="78"/>
    </location>
</feature>
<feature type="strand" evidence="19">
    <location>
        <begin position="79"/>
        <end position="81"/>
    </location>
</feature>
<feature type="strand" evidence="19">
    <location>
        <begin position="83"/>
        <end position="88"/>
    </location>
</feature>
<feature type="strand" evidence="19">
    <location>
        <begin position="91"/>
        <end position="96"/>
    </location>
</feature>
<feature type="turn" evidence="19">
    <location>
        <begin position="97"/>
        <end position="99"/>
    </location>
</feature>
<keyword id="KW-0002">3D-structure</keyword>
<keyword id="KW-0903">Direct protein sequencing</keyword>
<keyword id="KW-1185">Reference proteome</keyword>
<keyword id="KW-0687">Ribonucleoprotein</keyword>
<keyword id="KW-0689">Ribosomal protein</keyword>
<keyword id="KW-0694">RNA-binding</keyword>
<keyword id="KW-0699">rRNA-binding</keyword>
<accession>P60624</accession>
<accession>P02425</accession>
<accession>P37438</accession>
<accession>Q2M6X4</accession>
<protein>
    <recommendedName>
        <fullName evidence="15">Large ribosomal subunit protein uL24</fullName>
    </recommendedName>
    <alternativeName>
        <fullName>50S ribosomal protein L24</fullName>
    </alternativeName>
</protein>